<comment type="function">
    <text>Binds 16S rRNA, required for the assembly of 30S particles and may also be responsible for determining the conformation of the 16S rRNA at the A site.</text>
</comment>
<comment type="subunit">
    <text evidence="1 2 3 4 5 6 7 8">Part of the 30S ribosomal subunit (PubMed:10094780, PubMed:12244297, PubMed:12809609, PubMed:16272117, PubMed:27906160, PubMed:27906161, PubMed:27934701). Contacts proteins S3 and S10 (By similarity).</text>
</comment>
<comment type="mass spectrometry"/>
<comment type="similarity">
    <text evidence="10">Belongs to the universal ribosomal protein uS14 family.</text>
</comment>
<proteinExistence type="evidence at protein level"/>
<protein>
    <recommendedName>
        <fullName evidence="9">Small ribosomal subunit protein uS14</fullName>
    </recommendedName>
    <alternativeName>
        <fullName>30S ribosomal protein S14</fullName>
    </alternativeName>
</protein>
<reference key="1">
    <citation type="submission" date="1982-10" db="PIR data bank">
        <authorList>
            <person name="Yaguchi M."/>
            <person name="Roy C."/>
            <person name="Reithmeier R.A.F."/>
            <person name="Wittmann-Liebold B."/>
        </authorList>
    </citation>
    <scope>PRELIMINARY PROTEIN SEQUENCE OF 2-101</scope>
    <source>
        <strain>K12</strain>
    </source>
</reference>
<reference key="2">
    <citation type="journal article" date="1983" name="Nucleic Acids Res.">
        <title>The spc ribosomal protein operon of Escherichia coli: sequence and cotranscription of the ribosomal protein genes and a protein export gene.</title>
        <authorList>
            <person name="Cerretti D.P."/>
            <person name="Dean D."/>
            <person name="Davis G.R."/>
            <person name="Bedwell D.M."/>
            <person name="Nomura M."/>
        </authorList>
    </citation>
    <scope>NUCLEOTIDE SEQUENCE [GENOMIC DNA]</scope>
    <source>
        <strain>K12</strain>
    </source>
</reference>
<reference key="3">
    <citation type="journal article" date="1997" name="Science">
        <title>The complete genome sequence of Escherichia coli K-12.</title>
        <authorList>
            <person name="Blattner F.R."/>
            <person name="Plunkett G. III"/>
            <person name="Bloch C.A."/>
            <person name="Perna N.T."/>
            <person name="Burland V."/>
            <person name="Riley M."/>
            <person name="Collado-Vides J."/>
            <person name="Glasner J.D."/>
            <person name="Rode C.K."/>
            <person name="Mayhew G.F."/>
            <person name="Gregor J."/>
            <person name="Davis N.W."/>
            <person name="Kirkpatrick H.A."/>
            <person name="Goeden M.A."/>
            <person name="Rose D.J."/>
            <person name="Mau B."/>
            <person name="Shao Y."/>
        </authorList>
    </citation>
    <scope>NUCLEOTIDE SEQUENCE [LARGE SCALE GENOMIC DNA]</scope>
    <source>
        <strain>K12 / MG1655 / ATCC 47076</strain>
    </source>
</reference>
<reference key="4">
    <citation type="journal article" date="2006" name="Mol. Syst. Biol.">
        <title>Highly accurate genome sequences of Escherichia coli K-12 strains MG1655 and W3110.</title>
        <authorList>
            <person name="Hayashi K."/>
            <person name="Morooka N."/>
            <person name="Yamamoto Y."/>
            <person name="Fujita K."/>
            <person name="Isono K."/>
            <person name="Choi S."/>
            <person name="Ohtsubo E."/>
            <person name="Baba T."/>
            <person name="Wanner B.L."/>
            <person name="Mori H."/>
            <person name="Horiuchi T."/>
        </authorList>
    </citation>
    <scope>NUCLEOTIDE SEQUENCE [LARGE SCALE GENOMIC DNA]</scope>
    <source>
        <strain>K12 / W3110 / ATCC 27325 / DSM 5911</strain>
    </source>
</reference>
<reference key="5">
    <citation type="journal article" date="1999" name="Anal. Biochem.">
        <title>Observation of Escherichia coli ribosomal proteins and their posttranslational modifications by mass spectrometry.</title>
        <authorList>
            <person name="Arnold R.J."/>
            <person name="Reilly J.P."/>
        </authorList>
    </citation>
    <scope>MASS SPECTROMETRY</scope>
    <scope>SUBUNIT</scope>
    <source>
        <strain>K12 / ATCC 25404 / DSM 5698 / NCIMB 11290</strain>
    </source>
</reference>
<reference key="6">
    <citation type="journal article" date="2014" name="Curr. Opin. Struct. Biol.">
        <title>A new system for naming ribosomal proteins.</title>
        <authorList>
            <person name="Ban N."/>
            <person name="Beckmann R."/>
            <person name="Cate J.H.D."/>
            <person name="Dinman J.D."/>
            <person name="Dragon F."/>
            <person name="Ellis S.R."/>
            <person name="Lafontaine D.L.J."/>
            <person name="Lindahl L."/>
            <person name="Liljas A."/>
            <person name="Lipton J.M."/>
            <person name="McAlear M.A."/>
            <person name="Moore P.B."/>
            <person name="Noller H.F."/>
            <person name="Ortega J."/>
            <person name="Panse V.G."/>
            <person name="Ramakrishnan V."/>
            <person name="Spahn C.M.T."/>
            <person name="Steitz T.A."/>
            <person name="Tchorzewski M."/>
            <person name="Tollervey D."/>
            <person name="Warren A.J."/>
            <person name="Williamson J.R."/>
            <person name="Wilson D."/>
            <person name="Yonath A."/>
            <person name="Yusupov M."/>
        </authorList>
    </citation>
    <scope>NOMENCLATURE</scope>
</reference>
<reference key="7">
    <citation type="journal article" date="2002" name="Nat. Struct. Biol.">
        <title>All-atom homology model of the Escherichia coli 30S ribosomal subunit.</title>
        <authorList>
            <person name="Tung C.-S."/>
            <person name="Joseph S."/>
            <person name="Sanbonmatsu K.Y."/>
        </authorList>
    </citation>
    <scope>3D-STRUCTURE MODELING</scope>
    <scope>SUBUNIT</scope>
</reference>
<reference key="8">
    <citation type="journal article" date="2003" name="Cell">
        <title>Study of the structural dynamics of the E. coli 70S ribosome using real-space refinement.</title>
        <authorList>
            <person name="Gao H."/>
            <person name="Sengupta J."/>
            <person name="Valle M."/>
            <person name="Korostelev A."/>
            <person name="Eswar N."/>
            <person name="Stagg S.M."/>
            <person name="Van Roey P."/>
            <person name="Agrawal R.K."/>
            <person name="Harvey S.C."/>
            <person name="Sali A."/>
            <person name="Chapman M.S."/>
            <person name="Frank J."/>
        </authorList>
    </citation>
    <scope>STRUCTURE BY ELECTRON MICROSCOPY (11.50 ANGSTROMS)</scope>
    <source>
        <strain>MRE-600</strain>
    </source>
</reference>
<reference key="9">
    <citation type="journal article" date="2005" name="Science">
        <title>Structures of the bacterial ribosome at 3.5 A resolution.</title>
        <authorList>
            <person name="Schuwirth B.S."/>
            <person name="Borovinskaya M.A."/>
            <person name="Hau C.W."/>
            <person name="Zhang W."/>
            <person name="Vila-Sanjurjo A."/>
            <person name="Holton J.M."/>
            <person name="Cate J.H.D."/>
        </authorList>
    </citation>
    <scope>X-RAY CRYSTALLOGRAPHY (3.46 ANGSTROMS) OF 2 DIFFERENT RIBOSOME STRUCTURES</scope>
    <source>
        <strain>MRE-600</strain>
    </source>
</reference>
<reference key="10">
    <citation type="journal article" date="2017" name="Nature">
        <title>Mechanistic insights into the alternative translation termination by ArfA and RF2.</title>
        <authorList>
            <person name="Ma C."/>
            <person name="Kurita D."/>
            <person name="Li N."/>
            <person name="Chen Y."/>
            <person name="Himeno H."/>
            <person name="Gao N."/>
        </authorList>
    </citation>
    <scope>STRUCTURE BY ELECTRON MICROSCOPY (3.0 ANGSTROMS) OF 70S RIBOSOME IN COMPLEX WITH ARFA AND RF2</scope>
    <scope>SUBUNIT</scope>
</reference>
<reference key="11">
    <citation type="journal article" date="2017" name="Nature">
        <title>Structural basis for ArfA-RF2-mediated translation termination on mRNAs lacking stop codons.</title>
        <authorList>
            <person name="Huter P."/>
            <person name="Mueller C."/>
            <person name="Beckert B."/>
            <person name="Arenz S."/>
            <person name="Berninghausen O."/>
            <person name="Beckmann R."/>
            <person name="Wilson D.N."/>
        </authorList>
    </citation>
    <scope>STRUCTURE BY ELECTRON MICROSCOPY (3.1 ANGSTROMS) OF 70S RIBOSOME IN COMPLEX WITH ARFA AND RF2</scope>
    <scope>SUBUNIT</scope>
</reference>
<reference key="12">
    <citation type="journal article" date="2016" name="Science">
        <title>Translational termination without a stop codon.</title>
        <authorList>
            <person name="James N.R."/>
            <person name="Brown A."/>
            <person name="Gordiyenko Y."/>
            <person name="Ramakrishnan V."/>
        </authorList>
    </citation>
    <scope>STRUCTURE BY ELECTRON MICROSCOPY (2.97 ANGSTROMS) OF 70S RIBOSOME IN COMPLEX WITH ARFA AND RF2</scope>
    <scope>SUBUNIT</scope>
</reference>
<reference key="13">
    <citation type="journal article" date="2017" name="Nature">
        <title>Structural basis of co-translational quality control by ArfA and RF2 bound to ribosome.</title>
        <authorList>
            <person name="Zeng F."/>
            <person name="Chen Y."/>
            <person name="Remis J."/>
            <person name="Shekhar M."/>
            <person name="Phillips J.C."/>
            <person name="Tajkhorshid E."/>
            <person name="Jin H."/>
        </authorList>
    </citation>
    <scope>STRUCTURE BY ELECTRON MICROSCOPY (3.52 ANGSTROMS) OF 70S RIBOSOME IN COMPLEX WITH ARFA AND RF2</scope>
    <scope>SUBUNIT</scope>
</reference>
<feature type="initiator methionine" description="Removed">
    <location>
        <position position="1"/>
    </location>
</feature>
<feature type="chain" id="PRO_0000130890" description="Small ribosomal subunit protein uS14">
    <location>
        <begin position="2"/>
        <end position="101"/>
    </location>
</feature>
<feature type="sequence conflict" description="In Ref. 1; AA sequence." evidence="10" ref="1">
    <original>E</original>
    <variation>Q</variation>
    <location>
        <position position="92"/>
    </location>
</feature>
<feature type="sequence conflict" description="In Ref. 2; CAA25718." evidence="10" ref="2">
    <original>ASW</original>
    <variation>G</variation>
    <location>
        <begin position="99"/>
        <end position="101"/>
    </location>
</feature>
<feature type="helix" evidence="13">
    <location>
        <begin position="4"/>
        <end position="19"/>
    </location>
</feature>
<feature type="helix" evidence="13">
    <location>
        <begin position="21"/>
        <end position="32"/>
    </location>
</feature>
<feature type="strand" evidence="14">
    <location>
        <begin position="34"/>
        <end position="36"/>
    </location>
</feature>
<feature type="helix" evidence="13">
    <location>
        <begin position="38"/>
        <end position="50"/>
    </location>
</feature>
<feature type="helix" evidence="13">
    <location>
        <begin position="53"/>
        <end position="55"/>
    </location>
</feature>
<feature type="helix" evidence="13">
    <location>
        <begin position="57"/>
        <end position="59"/>
    </location>
</feature>
<feature type="turn" evidence="13">
    <location>
        <begin position="65"/>
        <end position="67"/>
    </location>
</feature>
<feature type="strand" evidence="13">
    <location>
        <begin position="70"/>
        <end position="74"/>
    </location>
</feature>
<feature type="turn" evidence="13">
    <location>
        <begin position="75"/>
        <end position="78"/>
    </location>
</feature>
<feature type="helix" evidence="13">
    <location>
        <begin position="81"/>
        <end position="89"/>
    </location>
</feature>
<feature type="turn" evidence="12">
    <location>
        <begin position="90"/>
        <end position="92"/>
    </location>
</feature>
<feature type="strand" evidence="11">
    <location>
        <begin position="93"/>
        <end position="95"/>
    </location>
</feature>
<feature type="strand" evidence="14">
    <location>
        <begin position="96"/>
        <end position="98"/>
    </location>
</feature>
<gene>
    <name type="primary">rpsN</name>
    <name type="ordered locus">b3307</name>
    <name type="ordered locus">JW3269</name>
</gene>
<keyword id="KW-0002">3D-structure</keyword>
<keyword id="KW-0903">Direct protein sequencing</keyword>
<keyword id="KW-1185">Reference proteome</keyword>
<keyword id="KW-0687">Ribonucleoprotein</keyword>
<keyword id="KW-0689">Ribosomal protein</keyword>
<name>RS14_ECOLI</name>
<sequence>MAKQSMKAREVKRVALADKYFAKRAELKAIISDVNASDEDRWNAVLKLQTLPRDSSPSRQRNRCRQTGRPHGFLRKFGLSRIKVREAAMRGEIPGLKKASW</sequence>
<evidence type="ECO:0000255" key="1">
    <source>
        <dbReference type="HAMAP-Rule" id="MF_00537"/>
    </source>
</evidence>
<evidence type="ECO:0000269" key="2">
    <source>
    </source>
</evidence>
<evidence type="ECO:0000269" key="3">
    <source>
    </source>
</evidence>
<evidence type="ECO:0000269" key="4">
    <source>
    </source>
</evidence>
<evidence type="ECO:0000269" key="5">
    <source>
    </source>
</evidence>
<evidence type="ECO:0000269" key="6">
    <source>
    </source>
</evidence>
<evidence type="ECO:0000269" key="7">
    <source>
    </source>
</evidence>
<evidence type="ECO:0000269" key="8">
    <source>
    </source>
</evidence>
<evidence type="ECO:0000303" key="9">
    <source>
    </source>
</evidence>
<evidence type="ECO:0000305" key="10"/>
<evidence type="ECO:0007829" key="11">
    <source>
        <dbReference type="PDB" id="7AF8"/>
    </source>
</evidence>
<evidence type="ECO:0007829" key="12">
    <source>
        <dbReference type="PDB" id="7OE0"/>
    </source>
</evidence>
<evidence type="ECO:0007829" key="13">
    <source>
        <dbReference type="PDB" id="8CF1"/>
    </source>
</evidence>
<evidence type="ECO:0007829" key="14">
    <source>
        <dbReference type="PDB" id="8CGI"/>
    </source>
</evidence>
<accession>P0AG59</accession>
<accession>P02370</accession>
<accession>Q2M6X2</accession>
<dbReference type="EMBL" id="X01563">
    <property type="protein sequence ID" value="CAA25718.1"/>
    <property type="molecule type" value="Genomic_DNA"/>
</dbReference>
<dbReference type="EMBL" id="U18997">
    <property type="protein sequence ID" value="AAA58104.1"/>
    <property type="molecule type" value="Genomic_DNA"/>
</dbReference>
<dbReference type="EMBL" id="U00096">
    <property type="protein sequence ID" value="AAC76332.1"/>
    <property type="molecule type" value="Genomic_DNA"/>
</dbReference>
<dbReference type="EMBL" id="AP009048">
    <property type="protein sequence ID" value="BAE77984.1"/>
    <property type="molecule type" value="Genomic_DNA"/>
</dbReference>
<dbReference type="PIR" id="F65123">
    <property type="entry name" value="R3EC14"/>
</dbReference>
<dbReference type="RefSeq" id="NP_417766.1">
    <property type="nucleotide sequence ID" value="NC_000913.3"/>
</dbReference>
<dbReference type="RefSeq" id="WP_001118930.1">
    <property type="nucleotide sequence ID" value="NZ_STEB01000038.1"/>
</dbReference>
<dbReference type="PDB" id="2YKR">
    <property type="method" value="EM"/>
    <property type="resolution" value="9.80 A"/>
    <property type="chains" value="N=2-101"/>
</dbReference>
<dbReference type="PDB" id="3J9Y">
    <property type="method" value="EM"/>
    <property type="resolution" value="3.90 A"/>
    <property type="chains" value="n=1-101"/>
</dbReference>
<dbReference type="PDB" id="3J9Z">
    <property type="method" value="EM"/>
    <property type="resolution" value="3.60 A"/>
    <property type="chains" value="SN=2-101"/>
</dbReference>
<dbReference type="PDB" id="3JA1">
    <property type="method" value="EM"/>
    <property type="resolution" value="3.60 A"/>
    <property type="chains" value="SN=2-101"/>
</dbReference>
<dbReference type="PDB" id="3JBU">
    <property type="method" value="EM"/>
    <property type="resolution" value="3.64 A"/>
    <property type="chains" value="N=1-101"/>
</dbReference>
<dbReference type="PDB" id="3JBV">
    <property type="method" value="EM"/>
    <property type="resolution" value="3.32 A"/>
    <property type="chains" value="N=1-101"/>
</dbReference>
<dbReference type="PDB" id="3JCD">
    <property type="method" value="EM"/>
    <property type="resolution" value="3.70 A"/>
    <property type="chains" value="n=1-101"/>
</dbReference>
<dbReference type="PDB" id="3JCE">
    <property type="method" value="EM"/>
    <property type="resolution" value="3.20 A"/>
    <property type="chains" value="n=1-101"/>
</dbReference>
<dbReference type="PDB" id="3JCJ">
    <property type="method" value="EM"/>
    <property type="resolution" value="3.70 A"/>
    <property type="chains" value="w=1-101"/>
</dbReference>
<dbReference type="PDB" id="3JCN">
    <property type="method" value="EM"/>
    <property type="resolution" value="4.60 A"/>
    <property type="chains" value="q=1-101"/>
</dbReference>
<dbReference type="PDB" id="4A2I">
    <property type="method" value="EM"/>
    <property type="resolution" value="16.50 A"/>
    <property type="chains" value="N=2-101"/>
</dbReference>
<dbReference type="PDB" id="4ADV">
    <property type="method" value="EM"/>
    <property type="resolution" value="13.50 A"/>
    <property type="chains" value="N=2-101"/>
</dbReference>
<dbReference type="PDB" id="4U1U">
    <property type="method" value="X-ray"/>
    <property type="resolution" value="2.95 A"/>
    <property type="chains" value="AN/CN=2-101"/>
</dbReference>
<dbReference type="PDB" id="4U1V">
    <property type="method" value="X-ray"/>
    <property type="resolution" value="3.00 A"/>
    <property type="chains" value="AN/CN=2-101"/>
</dbReference>
<dbReference type="PDB" id="4U20">
    <property type="method" value="X-ray"/>
    <property type="resolution" value="2.90 A"/>
    <property type="chains" value="AN/CN=2-101"/>
</dbReference>
<dbReference type="PDB" id="4U24">
    <property type="method" value="X-ray"/>
    <property type="resolution" value="2.90 A"/>
    <property type="chains" value="AN/CN=2-101"/>
</dbReference>
<dbReference type="PDB" id="4U25">
    <property type="method" value="X-ray"/>
    <property type="resolution" value="2.90 A"/>
    <property type="chains" value="AN/CN=2-101"/>
</dbReference>
<dbReference type="PDB" id="4U26">
    <property type="method" value="X-ray"/>
    <property type="resolution" value="2.80 A"/>
    <property type="chains" value="AN/CN=2-101"/>
</dbReference>
<dbReference type="PDB" id="4U27">
    <property type="method" value="X-ray"/>
    <property type="resolution" value="2.80 A"/>
    <property type="chains" value="AN/CN=2-101"/>
</dbReference>
<dbReference type="PDB" id="4V47">
    <property type="method" value="EM"/>
    <property type="resolution" value="12.30 A"/>
    <property type="chains" value="BN=2-101"/>
</dbReference>
<dbReference type="PDB" id="4V48">
    <property type="method" value="EM"/>
    <property type="resolution" value="11.50 A"/>
    <property type="chains" value="BN=2-101"/>
</dbReference>
<dbReference type="PDB" id="4V4H">
    <property type="method" value="X-ray"/>
    <property type="resolution" value="3.46 A"/>
    <property type="chains" value="AN/CN=1-101"/>
</dbReference>
<dbReference type="PDB" id="4V4Q">
    <property type="method" value="X-ray"/>
    <property type="resolution" value="3.46 A"/>
    <property type="chains" value="AN/CN=2-101"/>
</dbReference>
<dbReference type="PDB" id="4V4V">
    <property type="method" value="EM"/>
    <property type="resolution" value="15.00 A"/>
    <property type="chains" value="AN=41-101"/>
</dbReference>
<dbReference type="PDB" id="4V4W">
    <property type="method" value="EM"/>
    <property type="resolution" value="15.00 A"/>
    <property type="chains" value="AN=41-101"/>
</dbReference>
<dbReference type="PDB" id="4V50">
    <property type="method" value="X-ray"/>
    <property type="resolution" value="3.22 A"/>
    <property type="chains" value="AN/CN=2-101"/>
</dbReference>
<dbReference type="PDB" id="4V52">
    <property type="method" value="X-ray"/>
    <property type="resolution" value="3.21 A"/>
    <property type="chains" value="AN/CN=2-101"/>
</dbReference>
<dbReference type="PDB" id="4V53">
    <property type="method" value="X-ray"/>
    <property type="resolution" value="3.54 A"/>
    <property type="chains" value="AN/CN=2-101"/>
</dbReference>
<dbReference type="PDB" id="4V54">
    <property type="method" value="X-ray"/>
    <property type="resolution" value="3.30 A"/>
    <property type="chains" value="AN/CN=2-101"/>
</dbReference>
<dbReference type="PDB" id="4V55">
    <property type="method" value="X-ray"/>
    <property type="resolution" value="4.00 A"/>
    <property type="chains" value="AN/CN=2-101"/>
</dbReference>
<dbReference type="PDB" id="4V56">
    <property type="method" value="X-ray"/>
    <property type="resolution" value="3.93 A"/>
    <property type="chains" value="AN/CN=2-101"/>
</dbReference>
<dbReference type="PDB" id="4V57">
    <property type="method" value="X-ray"/>
    <property type="resolution" value="3.50 A"/>
    <property type="chains" value="AN/CN=2-101"/>
</dbReference>
<dbReference type="PDB" id="4V5B">
    <property type="method" value="X-ray"/>
    <property type="resolution" value="3.74 A"/>
    <property type="chains" value="BN/DN=2-101"/>
</dbReference>
<dbReference type="PDB" id="4V5H">
    <property type="method" value="EM"/>
    <property type="resolution" value="5.80 A"/>
    <property type="chains" value="AN=2-101"/>
</dbReference>
<dbReference type="PDB" id="4V5Y">
    <property type="method" value="X-ray"/>
    <property type="resolution" value="4.45 A"/>
    <property type="chains" value="AN/CN=2-101"/>
</dbReference>
<dbReference type="PDB" id="4V64">
    <property type="method" value="X-ray"/>
    <property type="resolution" value="3.50 A"/>
    <property type="chains" value="AN/CN=2-101"/>
</dbReference>
<dbReference type="PDB" id="4V65">
    <property type="method" value="EM"/>
    <property type="resolution" value="9.00 A"/>
    <property type="chains" value="AG=1-101"/>
</dbReference>
<dbReference type="PDB" id="4V66">
    <property type="method" value="EM"/>
    <property type="resolution" value="9.00 A"/>
    <property type="chains" value="AG=1-101"/>
</dbReference>
<dbReference type="PDB" id="4V69">
    <property type="method" value="EM"/>
    <property type="resolution" value="6.70 A"/>
    <property type="chains" value="AN=2-101"/>
</dbReference>
<dbReference type="PDB" id="4V6C">
    <property type="method" value="X-ray"/>
    <property type="resolution" value="3.19 A"/>
    <property type="chains" value="AN/CN=1-101"/>
</dbReference>
<dbReference type="PDB" id="4V6D">
    <property type="method" value="X-ray"/>
    <property type="resolution" value="3.81 A"/>
    <property type="chains" value="AN/CN=1-101"/>
</dbReference>
<dbReference type="PDB" id="4V6E">
    <property type="method" value="X-ray"/>
    <property type="resolution" value="3.71 A"/>
    <property type="chains" value="AN/CN=1-101"/>
</dbReference>
<dbReference type="PDB" id="4V6K">
    <property type="method" value="EM"/>
    <property type="resolution" value="8.25 A"/>
    <property type="chains" value="BR=1-101"/>
</dbReference>
<dbReference type="PDB" id="4V6L">
    <property type="method" value="EM"/>
    <property type="resolution" value="13.20 A"/>
    <property type="chains" value="AR=1-101"/>
</dbReference>
<dbReference type="PDB" id="4V6M">
    <property type="method" value="EM"/>
    <property type="resolution" value="7.10 A"/>
    <property type="chains" value="AN=2-101"/>
</dbReference>
<dbReference type="PDB" id="4V6N">
    <property type="method" value="EM"/>
    <property type="resolution" value="12.10 A"/>
    <property type="chains" value="BQ=2-101"/>
</dbReference>
<dbReference type="PDB" id="4V6O">
    <property type="method" value="EM"/>
    <property type="resolution" value="14.70 A"/>
    <property type="chains" value="AQ=2-101"/>
</dbReference>
<dbReference type="PDB" id="4V6P">
    <property type="method" value="EM"/>
    <property type="resolution" value="13.50 A"/>
    <property type="chains" value="AQ=2-101"/>
</dbReference>
<dbReference type="PDB" id="4V6Q">
    <property type="method" value="EM"/>
    <property type="resolution" value="11.50 A"/>
    <property type="chains" value="AQ=2-101"/>
</dbReference>
<dbReference type="PDB" id="4V6R">
    <property type="method" value="EM"/>
    <property type="resolution" value="11.50 A"/>
    <property type="chains" value="AQ=2-101"/>
</dbReference>
<dbReference type="PDB" id="4V6S">
    <property type="method" value="EM"/>
    <property type="resolution" value="13.10 A"/>
    <property type="chains" value="BP=2-101"/>
</dbReference>
<dbReference type="PDB" id="4V6T">
    <property type="method" value="EM"/>
    <property type="resolution" value="8.30 A"/>
    <property type="chains" value="AN=2-101"/>
</dbReference>
<dbReference type="PDB" id="4V6V">
    <property type="method" value="EM"/>
    <property type="resolution" value="9.80 A"/>
    <property type="chains" value="AN=2-101"/>
</dbReference>
<dbReference type="PDB" id="4V6Y">
    <property type="method" value="EM"/>
    <property type="resolution" value="12.00 A"/>
    <property type="chains" value="AN=1-101"/>
</dbReference>
<dbReference type="PDB" id="4V6Z">
    <property type="method" value="EM"/>
    <property type="resolution" value="12.00 A"/>
    <property type="chains" value="AN=1-101"/>
</dbReference>
<dbReference type="PDB" id="4V70">
    <property type="method" value="EM"/>
    <property type="resolution" value="17.00 A"/>
    <property type="chains" value="AN=1-101"/>
</dbReference>
<dbReference type="PDB" id="4V71">
    <property type="method" value="EM"/>
    <property type="resolution" value="20.00 A"/>
    <property type="chains" value="AN=1-101"/>
</dbReference>
<dbReference type="PDB" id="4V72">
    <property type="method" value="EM"/>
    <property type="resolution" value="13.00 A"/>
    <property type="chains" value="AN=1-101"/>
</dbReference>
<dbReference type="PDB" id="4V73">
    <property type="method" value="EM"/>
    <property type="resolution" value="15.00 A"/>
    <property type="chains" value="AN=1-101"/>
</dbReference>
<dbReference type="PDB" id="4V74">
    <property type="method" value="EM"/>
    <property type="resolution" value="17.00 A"/>
    <property type="chains" value="AN=1-101"/>
</dbReference>
<dbReference type="PDB" id="4V75">
    <property type="method" value="EM"/>
    <property type="resolution" value="12.00 A"/>
    <property type="chains" value="AN=1-101"/>
</dbReference>
<dbReference type="PDB" id="4V76">
    <property type="method" value="EM"/>
    <property type="resolution" value="17.00 A"/>
    <property type="chains" value="AN=1-101"/>
</dbReference>
<dbReference type="PDB" id="4V77">
    <property type="method" value="EM"/>
    <property type="resolution" value="17.00 A"/>
    <property type="chains" value="AN=1-101"/>
</dbReference>
<dbReference type="PDB" id="4V78">
    <property type="method" value="EM"/>
    <property type="resolution" value="20.00 A"/>
    <property type="chains" value="AN=1-101"/>
</dbReference>
<dbReference type="PDB" id="4V79">
    <property type="method" value="EM"/>
    <property type="resolution" value="15.00 A"/>
    <property type="chains" value="AN=1-101"/>
</dbReference>
<dbReference type="PDB" id="4V7A">
    <property type="method" value="EM"/>
    <property type="resolution" value="9.00 A"/>
    <property type="chains" value="AN=1-101"/>
</dbReference>
<dbReference type="PDB" id="4V7B">
    <property type="method" value="EM"/>
    <property type="resolution" value="6.80 A"/>
    <property type="chains" value="AN=1-101"/>
</dbReference>
<dbReference type="PDB" id="4V7C">
    <property type="method" value="EM"/>
    <property type="resolution" value="7.60 A"/>
    <property type="chains" value="AN=2-101"/>
</dbReference>
<dbReference type="PDB" id="4V7D">
    <property type="method" value="EM"/>
    <property type="resolution" value="7.60 A"/>
    <property type="chains" value="BN=2-101"/>
</dbReference>
<dbReference type="PDB" id="4V7I">
    <property type="method" value="EM"/>
    <property type="resolution" value="9.60 A"/>
    <property type="chains" value="BN=1-101"/>
</dbReference>
<dbReference type="PDB" id="4V7S">
    <property type="method" value="X-ray"/>
    <property type="resolution" value="3.25 A"/>
    <property type="chains" value="AN/CN=2-101"/>
</dbReference>
<dbReference type="PDB" id="4V7T">
    <property type="method" value="X-ray"/>
    <property type="resolution" value="3.19 A"/>
    <property type="chains" value="AN/CN=2-101"/>
</dbReference>
<dbReference type="PDB" id="4V7U">
    <property type="method" value="X-ray"/>
    <property type="resolution" value="3.10 A"/>
    <property type="chains" value="AN/CN=2-101"/>
</dbReference>
<dbReference type="PDB" id="4V7V">
    <property type="method" value="X-ray"/>
    <property type="resolution" value="3.29 A"/>
    <property type="chains" value="AN/CN=2-101"/>
</dbReference>
<dbReference type="PDB" id="4V85">
    <property type="method" value="X-ray"/>
    <property type="resolution" value="3.20 A"/>
    <property type="chains" value="AN=1-101"/>
</dbReference>
<dbReference type="PDB" id="4V89">
    <property type="method" value="X-ray"/>
    <property type="resolution" value="3.70 A"/>
    <property type="chains" value="AN=1-101"/>
</dbReference>
<dbReference type="PDB" id="4V9C">
    <property type="method" value="X-ray"/>
    <property type="resolution" value="3.30 A"/>
    <property type="chains" value="AN/CN=1-101"/>
</dbReference>
<dbReference type="PDB" id="4V9D">
    <property type="method" value="X-ray"/>
    <property type="resolution" value="3.00 A"/>
    <property type="chains" value="AN/BN=2-101"/>
</dbReference>
<dbReference type="PDB" id="4V9O">
    <property type="method" value="X-ray"/>
    <property type="resolution" value="2.90 A"/>
    <property type="chains" value="BN/DN/FN/HN=1-101"/>
</dbReference>
<dbReference type="PDB" id="4V9P">
    <property type="method" value="X-ray"/>
    <property type="resolution" value="2.90 A"/>
    <property type="chains" value="BN/DN/FN/HN=1-101"/>
</dbReference>
<dbReference type="PDB" id="4WF1">
    <property type="method" value="X-ray"/>
    <property type="resolution" value="3.09 A"/>
    <property type="chains" value="AN/CN=2-101"/>
</dbReference>
<dbReference type="PDB" id="4WOI">
    <property type="method" value="X-ray"/>
    <property type="resolution" value="3.00 A"/>
    <property type="chains" value="AN/DN=1-101"/>
</dbReference>
<dbReference type="PDB" id="4WWW">
    <property type="method" value="X-ray"/>
    <property type="resolution" value="3.10 A"/>
    <property type="chains" value="QN/XN=1-101"/>
</dbReference>
<dbReference type="PDB" id="4YBB">
    <property type="method" value="X-ray"/>
    <property type="resolution" value="2.10 A"/>
    <property type="chains" value="AN/BN=2-101"/>
</dbReference>
<dbReference type="PDB" id="5AFI">
    <property type="method" value="EM"/>
    <property type="resolution" value="2.90 A"/>
    <property type="chains" value="n=1-101"/>
</dbReference>
<dbReference type="PDB" id="5H5U">
    <property type="method" value="EM"/>
    <property type="resolution" value="3.00 A"/>
    <property type="chains" value="u=2-101"/>
</dbReference>
<dbReference type="PDB" id="5IQR">
    <property type="method" value="EM"/>
    <property type="resolution" value="3.00 A"/>
    <property type="chains" value="s=1-101"/>
</dbReference>
<dbReference type="PDB" id="5IT8">
    <property type="method" value="X-ray"/>
    <property type="resolution" value="3.12 A"/>
    <property type="chains" value="AN/BN=2-101"/>
</dbReference>
<dbReference type="PDB" id="5J5B">
    <property type="method" value="X-ray"/>
    <property type="resolution" value="2.80 A"/>
    <property type="chains" value="AN/BN=2-101"/>
</dbReference>
<dbReference type="PDB" id="5J7L">
    <property type="method" value="X-ray"/>
    <property type="resolution" value="3.00 A"/>
    <property type="chains" value="AN/BN=2-101"/>
</dbReference>
<dbReference type="PDB" id="5J88">
    <property type="method" value="X-ray"/>
    <property type="resolution" value="3.32 A"/>
    <property type="chains" value="AN/BN=2-101"/>
</dbReference>
<dbReference type="PDB" id="5J8A">
    <property type="method" value="X-ray"/>
    <property type="resolution" value="3.10 A"/>
    <property type="chains" value="AN/BN=2-101"/>
</dbReference>
<dbReference type="PDB" id="5J91">
    <property type="method" value="X-ray"/>
    <property type="resolution" value="2.96 A"/>
    <property type="chains" value="AN/BN=2-101"/>
</dbReference>
<dbReference type="PDB" id="5JC9">
    <property type="method" value="X-ray"/>
    <property type="resolution" value="3.03 A"/>
    <property type="chains" value="AN/BN=2-101"/>
</dbReference>
<dbReference type="PDB" id="5JTE">
    <property type="method" value="EM"/>
    <property type="resolution" value="3.60 A"/>
    <property type="chains" value="AN=1-101"/>
</dbReference>
<dbReference type="PDB" id="5JU8">
    <property type="method" value="EM"/>
    <property type="resolution" value="3.60 A"/>
    <property type="chains" value="AN=1-101"/>
</dbReference>
<dbReference type="PDB" id="5KCR">
    <property type="method" value="EM"/>
    <property type="resolution" value="3.60 A"/>
    <property type="chains" value="1n=1-101"/>
</dbReference>
<dbReference type="PDB" id="5KCS">
    <property type="method" value="EM"/>
    <property type="resolution" value="3.90 A"/>
    <property type="chains" value="1n=1-101"/>
</dbReference>
<dbReference type="PDB" id="5KPS">
    <property type="method" value="EM"/>
    <property type="resolution" value="3.90 A"/>
    <property type="chains" value="19=1-101"/>
</dbReference>
<dbReference type="PDB" id="5KPV">
    <property type="method" value="EM"/>
    <property type="resolution" value="4.10 A"/>
    <property type="chains" value="18=1-101"/>
</dbReference>
<dbReference type="PDB" id="5KPW">
    <property type="method" value="EM"/>
    <property type="resolution" value="3.90 A"/>
    <property type="chains" value="18=1-101"/>
</dbReference>
<dbReference type="PDB" id="5KPX">
    <property type="method" value="EM"/>
    <property type="resolution" value="3.90 A"/>
    <property type="chains" value="18=1-101"/>
</dbReference>
<dbReference type="PDB" id="5L3P">
    <property type="method" value="EM"/>
    <property type="resolution" value="3.70 A"/>
    <property type="chains" value="n=1-101"/>
</dbReference>
<dbReference type="PDB" id="5LZA">
    <property type="method" value="EM"/>
    <property type="resolution" value="3.60 A"/>
    <property type="chains" value="n=2-101"/>
</dbReference>
<dbReference type="PDB" id="5LZB">
    <property type="method" value="EM"/>
    <property type="resolution" value="5.30 A"/>
    <property type="chains" value="n=2-101"/>
</dbReference>
<dbReference type="PDB" id="5LZC">
    <property type="method" value="EM"/>
    <property type="resolution" value="4.80 A"/>
    <property type="chains" value="n=2-101"/>
</dbReference>
<dbReference type="PDB" id="5LZD">
    <property type="method" value="EM"/>
    <property type="resolution" value="3.40 A"/>
    <property type="chains" value="n=2-101"/>
</dbReference>
<dbReference type="PDB" id="5LZE">
    <property type="method" value="EM"/>
    <property type="resolution" value="3.50 A"/>
    <property type="chains" value="n=2-101"/>
</dbReference>
<dbReference type="PDB" id="5LZF">
    <property type="method" value="EM"/>
    <property type="resolution" value="4.60 A"/>
    <property type="chains" value="n=2-101"/>
</dbReference>
<dbReference type="PDB" id="5MDV">
    <property type="method" value="EM"/>
    <property type="resolution" value="2.97 A"/>
    <property type="chains" value="s=1-101"/>
</dbReference>
<dbReference type="PDB" id="5MDW">
    <property type="method" value="EM"/>
    <property type="resolution" value="3.06 A"/>
    <property type="chains" value="s=1-101"/>
</dbReference>
<dbReference type="PDB" id="5MDY">
    <property type="method" value="EM"/>
    <property type="resolution" value="3.35 A"/>
    <property type="chains" value="s=1-101"/>
</dbReference>
<dbReference type="PDB" id="5MDZ">
    <property type="method" value="EM"/>
    <property type="resolution" value="3.10 A"/>
    <property type="chains" value="s=1-101"/>
</dbReference>
<dbReference type="PDB" id="5ME0">
    <property type="method" value="EM"/>
    <property type="resolution" value="13.50 A"/>
    <property type="chains" value="N=1-101"/>
</dbReference>
<dbReference type="PDB" id="5ME1">
    <property type="method" value="EM"/>
    <property type="resolution" value="13.50 A"/>
    <property type="chains" value="N=1-101"/>
</dbReference>
<dbReference type="PDB" id="5MGP">
    <property type="method" value="EM"/>
    <property type="resolution" value="3.10 A"/>
    <property type="chains" value="n=2-101"/>
</dbReference>
<dbReference type="PDB" id="5MY1">
    <property type="method" value="EM"/>
    <property type="resolution" value="7.60 A"/>
    <property type="chains" value="N=2-101"/>
</dbReference>
<dbReference type="PDB" id="5NO2">
    <property type="method" value="EM"/>
    <property type="resolution" value="5.16 A"/>
    <property type="chains" value="N=2-101"/>
</dbReference>
<dbReference type="PDB" id="5NO3">
    <property type="method" value="EM"/>
    <property type="resolution" value="5.16 A"/>
    <property type="chains" value="N=2-101"/>
</dbReference>
<dbReference type="PDB" id="5NO4">
    <property type="method" value="EM"/>
    <property type="resolution" value="5.16 A"/>
    <property type="chains" value="N=2-101"/>
</dbReference>
<dbReference type="PDB" id="5NP6">
    <property type="method" value="EM"/>
    <property type="resolution" value="3.60 A"/>
    <property type="chains" value="Q=2-101"/>
</dbReference>
<dbReference type="PDB" id="5NWY">
    <property type="method" value="EM"/>
    <property type="resolution" value="2.93 A"/>
    <property type="chains" value="D=1-101"/>
</dbReference>
<dbReference type="PDB" id="5O2R">
    <property type="method" value="EM"/>
    <property type="resolution" value="3.40 A"/>
    <property type="chains" value="n=2-101"/>
</dbReference>
<dbReference type="PDB" id="5U4I">
    <property type="method" value="EM"/>
    <property type="resolution" value="3.50 A"/>
    <property type="chains" value="n=2-101"/>
</dbReference>
<dbReference type="PDB" id="5U9F">
    <property type="method" value="EM"/>
    <property type="resolution" value="3.20 A"/>
    <property type="chains" value="N=1-101"/>
</dbReference>
<dbReference type="PDB" id="5U9G">
    <property type="method" value="EM"/>
    <property type="resolution" value="3.20 A"/>
    <property type="chains" value="N=1-101"/>
</dbReference>
<dbReference type="PDB" id="5UYK">
    <property type="method" value="EM"/>
    <property type="resolution" value="3.90 A"/>
    <property type="chains" value="N=2-101"/>
</dbReference>
<dbReference type="PDB" id="5UYL">
    <property type="method" value="EM"/>
    <property type="resolution" value="3.60 A"/>
    <property type="chains" value="N=2-101"/>
</dbReference>
<dbReference type="PDB" id="5UYM">
    <property type="method" value="EM"/>
    <property type="resolution" value="3.20 A"/>
    <property type="chains" value="N=2-101"/>
</dbReference>
<dbReference type="PDB" id="5UYN">
    <property type="method" value="EM"/>
    <property type="resolution" value="4.00 A"/>
    <property type="chains" value="N=2-101"/>
</dbReference>
<dbReference type="PDB" id="5UYP">
    <property type="method" value="EM"/>
    <property type="resolution" value="3.90 A"/>
    <property type="chains" value="N=2-101"/>
</dbReference>
<dbReference type="PDB" id="5UYQ">
    <property type="method" value="EM"/>
    <property type="resolution" value="3.80 A"/>
    <property type="chains" value="N=2-101"/>
</dbReference>
<dbReference type="PDB" id="5UZ4">
    <property type="method" value="EM"/>
    <property type="resolution" value="5.80 A"/>
    <property type="chains" value="N=1-101"/>
</dbReference>
<dbReference type="PDB" id="5WDT">
    <property type="method" value="EM"/>
    <property type="resolution" value="3.00 A"/>
    <property type="chains" value="n=2-101"/>
</dbReference>
<dbReference type="PDB" id="5WE4">
    <property type="method" value="EM"/>
    <property type="resolution" value="3.10 A"/>
    <property type="chains" value="n=2-101"/>
</dbReference>
<dbReference type="PDB" id="5WE6">
    <property type="method" value="EM"/>
    <property type="resolution" value="3.40 A"/>
    <property type="chains" value="n=2-101"/>
</dbReference>
<dbReference type="PDB" id="5WF0">
    <property type="method" value="EM"/>
    <property type="resolution" value="3.60 A"/>
    <property type="chains" value="n=2-101"/>
</dbReference>
<dbReference type="PDB" id="5WFK">
    <property type="method" value="EM"/>
    <property type="resolution" value="3.40 A"/>
    <property type="chains" value="n=2-101"/>
</dbReference>
<dbReference type="PDB" id="5WFS">
    <property type="method" value="EM"/>
    <property type="resolution" value="3.00 A"/>
    <property type="chains" value="n=2-101"/>
</dbReference>
<dbReference type="PDB" id="6AWB">
    <property type="method" value="EM"/>
    <property type="resolution" value="6.70 A"/>
    <property type="chains" value="Q=2-101"/>
</dbReference>
<dbReference type="PDB" id="6AWC">
    <property type="method" value="EM"/>
    <property type="resolution" value="7.90 A"/>
    <property type="chains" value="Q=2-101"/>
</dbReference>
<dbReference type="PDB" id="6AWD">
    <property type="method" value="EM"/>
    <property type="resolution" value="8.10 A"/>
    <property type="chains" value="Q=2-101"/>
</dbReference>
<dbReference type="PDB" id="6BU8">
    <property type="method" value="EM"/>
    <property type="resolution" value="3.50 A"/>
    <property type="chains" value="N=2-101"/>
</dbReference>
<dbReference type="PDB" id="6BY1">
    <property type="method" value="X-ray"/>
    <property type="resolution" value="3.94 A"/>
    <property type="chains" value="AN/BN=1-101"/>
</dbReference>
<dbReference type="PDB" id="6C4I">
    <property type="method" value="EM"/>
    <property type="resolution" value="3.24 A"/>
    <property type="chains" value="n=1-101"/>
</dbReference>
<dbReference type="PDB" id="6DNC">
    <property type="method" value="EM"/>
    <property type="resolution" value="3.70 A"/>
    <property type="chains" value="AB=1-101"/>
</dbReference>
<dbReference type="PDB" id="6ENF">
    <property type="method" value="EM"/>
    <property type="resolution" value="3.20 A"/>
    <property type="chains" value="n=2-101"/>
</dbReference>
<dbReference type="PDB" id="6ENJ">
    <property type="method" value="EM"/>
    <property type="resolution" value="3.70 A"/>
    <property type="chains" value="n=2-101"/>
</dbReference>
<dbReference type="PDB" id="6ENU">
    <property type="method" value="EM"/>
    <property type="resolution" value="3.10 A"/>
    <property type="chains" value="n=2-101"/>
</dbReference>
<dbReference type="PDB" id="6GWT">
    <property type="method" value="EM"/>
    <property type="resolution" value="3.80 A"/>
    <property type="chains" value="n=2-101"/>
</dbReference>
<dbReference type="PDB" id="6GXM">
    <property type="method" value="EM"/>
    <property type="resolution" value="3.80 A"/>
    <property type="chains" value="n=2-101"/>
</dbReference>
<dbReference type="PDB" id="6GXN">
    <property type="method" value="EM"/>
    <property type="resolution" value="3.90 A"/>
    <property type="chains" value="n=2-101"/>
</dbReference>
<dbReference type="PDB" id="6GXO">
    <property type="method" value="EM"/>
    <property type="resolution" value="3.90 A"/>
    <property type="chains" value="n=2-101"/>
</dbReference>
<dbReference type="PDB" id="6GXP">
    <property type="method" value="EM"/>
    <property type="resolution" value="4.40 A"/>
    <property type="chains" value="n=2-101"/>
</dbReference>
<dbReference type="PDB" id="6H4N">
    <property type="method" value="EM"/>
    <property type="resolution" value="3.00 A"/>
    <property type="chains" value="n=2-101"/>
</dbReference>
<dbReference type="PDB" id="6H58">
    <property type="method" value="EM"/>
    <property type="resolution" value="7.90 A"/>
    <property type="chains" value="n/nn=2-101"/>
</dbReference>
<dbReference type="PDB" id="6HRM">
    <property type="method" value="EM"/>
    <property type="resolution" value="2.96 A"/>
    <property type="chains" value="s=2-101"/>
</dbReference>
<dbReference type="PDB" id="6I7V">
    <property type="method" value="X-ray"/>
    <property type="resolution" value="2.90 A"/>
    <property type="chains" value="AN/BN=2-101"/>
</dbReference>
<dbReference type="PDB" id="6NQB">
    <property type="method" value="EM"/>
    <property type="resolution" value="3.80 A"/>
    <property type="chains" value="N=2-101"/>
</dbReference>
<dbReference type="PDB" id="6O7K">
    <property type="method" value="EM"/>
    <property type="resolution" value="4.20 A"/>
    <property type="chains" value="w=2-101"/>
</dbReference>
<dbReference type="PDB" id="6O9J">
    <property type="method" value="EM"/>
    <property type="resolution" value="3.90 A"/>
    <property type="chains" value="n=2-101"/>
</dbReference>
<dbReference type="PDB" id="6O9K">
    <property type="method" value="EM"/>
    <property type="resolution" value="4.00 A"/>
    <property type="chains" value="n=41-101"/>
</dbReference>
<dbReference type="PDB" id="6OFX">
    <property type="method" value="EM"/>
    <property type="resolution" value="3.30 A"/>
    <property type="chains" value="S=2-101"/>
</dbReference>
<dbReference type="PDB" id="6OG7">
    <property type="method" value="EM"/>
    <property type="resolution" value="3.30 A"/>
    <property type="chains" value="S=2-101"/>
</dbReference>
<dbReference type="PDB" id="6OGF">
    <property type="method" value="EM"/>
    <property type="resolution" value="3.90 A"/>
    <property type="chains" value="S=1-101"/>
</dbReference>
<dbReference type="PDB" id="6OGG">
    <property type="method" value="EM"/>
    <property type="resolution" value="4.20 A"/>
    <property type="chains" value="S=1-101"/>
</dbReference>
<dbReference type="PDB" id="6OGI">
    <property type="method" value="EM"/>
    <property type="resolution" value="3.40 A"/>
    <property type="chains" value="S=1-101"/>
</dbReference>
<dbReference type="PDB" id="6OM6">
    <property type="method" value="EM"/>
    <property type="resolution" value="3.10 A"/>
    <property type="chains" value="s=1-101"/>
</dbReference>
<dbReference type="PDB" id="6ORE">
    <property type="method" value="EM"/>
    <property type="resolution" value="2.90 A"/>
    <property type="chains" value="s=2-101"/>
</dbReference>
<dbReference type="PDB" id="6ORL">
    <property type="method" value="EM"/>
    <property type="resolution" value="3.50 A"/>
    <property type="chains" value="s=2-101"/>
</dbReference>
<dbReference type="PDB" id="6OSK">
    <property type="method" value="EM"/>
    <property type="resolution" value="3.60 A"/>
    <property type="chains" value="s=2-101"/>
</dbReference>
<dbReference type="PDB" id="6OSQ">
    <property type="method" value="EM"/>
    <property type="resolution" value="3.50 A"/>
    <property type="chains" value="s=2-101"/>
</dbReference>
<dbReference type="PDB" id="6OST">
    <property type="method" value="EM"/>
    <property type="resolution" value="4.20 A"/>
    <property type="chains" value="s=2-101"/>
</dbReference>
<dbReference type="PDB" id="6OT3">
    <property type="method" value="EM"/>
    <property type="resolution" value="3.90 A"/>
    <property type="chains" value="s=2-101"/>
</dbReference>
<dbReference type="PDB" id="6OUO">
    <property type="method" value="EM"/>
    <property type="resolution" value="3.70 A"/>
    <property type="chains" value="s=2-101"/>
</dbReference>
<dbReference type="PDB" id="6Q97">
    <property type="method" value="EM"/>
    <property type="resolution" value="3.90 A"/>
    <property type="chains" value="s=2-101"/>
</dbReference>
<dbReference type="PDB" id="6Q98">
    <property type="method" value="EM"/>
    <property type="resolution" value="4.30 A"/>
    <property type="chains" value="s=1-101"/>
</dbReference>
<dbReference type="PDB" id="6Q9A">
    <property type="method" value="EM"/>
    <property type="resolution" value="3.70 A"/>
    <property type="chains" value="s=2-101"/>
</dbReference>
<dbReference type="PDB" id="6SZS">
    <property type="method" value="EM"/>
    <property type="resolution" value="3.06 A"/>
    <property type="chains" value="n=1-101"/>
</dbReference>
<dbReference type="PDB" id="6TBV">
    <property type="method" value="EM"/>
    <property type="resolution" value="2.70 A"/>
    <property type="chains" value="S141=1-101"/>
</dbReference>
<dbReference type="PDB" id="6TC3">
    <property type="method" value="EM"/>
    <property type="resolution" value="2.70 A"/>
    <property type="chains" value="S141=1-101"/>
</dbReference>
<dbReference type="PDB" id="6VU3">
    <property type="method" value="EM"/>
    <property type="resolution" value="3.70 A"/>
    <property type="chains" value="S=2-101"/>
</dbReference>
<dbReference type="PDB" id="6VWL">
    <property type="method" value="EM"/>
    <property type="resolution" value="3.10 A"/>
    <property type="chains" value="m=1-101"/>
</dbReference>
<dbReference type="PDB" id="6VWM">
    <property type="method" value="EM"/>
    <property type="resolution" value="3.40 A"/>
    <property type="chains" value="m=1-101"/>
</dbReference>
<dbReference type="PDB" id="6VWN">
    <property type="method" value="EM"/>
    <property type="resolution" value="3.40 A"/>
    <property type="chains" value="m=1-101"/>
</dbReference>
<dbReference type="PDB" id="6VYQ">
    <property type="method" value="EM"/>
    <property type="resolution" value="3.70 A"/>
    <property type="chains" value="S=1-101"/>
</dbReference>
<dbReference type="PDB" id="6VYR">
    <property type="method" value="EM"/>
    <property type="resolution" value="3.80 A"/>
    <property type="chains" value="S=1-101"/>
</dbReference>
<dbReference type="PDB" id="6VYS">
    <property type="method" value="EM"/>
    <property type="resolution" value="3.70 A"/>
    <property type="chains" value="S=1-101"/>
</dbReference>
<dbReference type="PDB" id="6VYT">
    <property type="method" value="EM"/>
    <property type="resolution" value="14.00 A"/>
    <property type="chains" value="S=1-101"/>
</dbReference>
<dbReference type="PDB" id="6VYU">
    <property type="method" value="EM"/>
    <property type="resolution" value="7.00 A"/>
    <property type="chains" value="S=1-101"/>
</dbReference>
<dbReference type="PDB" id="6VYW">
    <property type="method" value="EM"/>
    <property type="resolution" value="7.00 A"/>
    <property type="chains" value="S=1-101"/>
</dbReference>
<dbReference type="PDB" id="6VYX">
    <property type="method" value="EM"/>
    <property type="resolution" value="9.90 A"/>
    <property type="chains" value="S=1-101"/>
</dbReference>
<dbReference type="PDB" id="6VYY">
    <property type="method" value="EM"/>
    <property type="resolution" value="9.90 A"/>
    <property type="chains" value="S=1-101"/>
</dbReference>
<dbReference type="PDB" id="6VYZ">
    <property type="method" value="EM"/>
    <property type="resolution" value="9.90 A"/>
    <property type="chains" value="S=1-101"/>
</dbReference>
<dbReference type="PDB" id="6VZ2">
    <property type="method" value="EM"/>
    <property type="resolution" value="10.00 A"/>
    <property type="chains" value="S=1-101"/>
</dbReference>
<dbReference type="PDB" id="6VZ3">
    <property type="method" value="EM"/>
    <property type="resolution" value="8.90 A"/>
    <property type="chains" value="S=2-101"/>
</dbReference>
<dbReference type="PDB" id="6VZ5">
    <property type="method" value="EM"/>
    <property type="resolution" value="8.90 A"/>
    <property type="chains" value="S=1-101"/>
</dbReference>
<dbReference type="PDB" id="6VZ7">
    <property type="method" value="EM"/>
    <property type="resolution" value="7.00 A"/>
    <property type="chains" value="S=2-101"/>
</dbReference>
<dbReference type="PDB" id="6VZJ">
    <property type="method" value="EM"/>
    <property type="resolution" value="4.10 A"/>
    <property type="chains" value="S=1-101"/>
</dbReference>
<dbReference type="PDB" id="6W6K">
    <property type="method" value="EM"/>
    <property type="resolution" value="3.60 A"/>
    <property type="chains" value="N=1-101"/>
</dbReference>
<dbReference type="PDB" id="6W77">
    <property type="method" value="EM"/>
    <property type="resolution" value="3.60 A"/>
    <property type="chains" value="N=1-101"/>
</dbReference>
<dbReference type="PDB" id="6W7M">
    <property type="method" value="EM"/>
    <property type="resolution" value="3.80 A"/>
    <property type="chains" value="N=1-101"/>
</dbReference>
<dbReference type="PDB" id="6W7N">
    <property type="method" value="EM"/>
    <property type="resolution" value="3.40 A"/>
    <property type="chains" value="N=1-101"/>
</dbReference>
<dbReference type="PDB" id="6WD0">
    <property type="method" value="EM"/>
    <property type="resolution" value="3.00 A"/>
    <property type="chains" value="S=2-101"/>
</dbReference>
<dbReference type="PDB" id="6WD1">
    <property type="method" value="EM"/>
    <property type="resolution" value="3.30 A"/>
    <property type="chains" value="S=2-101"/>
</dbReference>
<dbReference type="PDB" id="6WD2">
    <property type="method" value="EM"/>
    <property type="resolution" value="3.60 A"/>
    <property type="chains" value="S=2-101"/>
</dbReference>
<dbReference type="PDB" id="6WD3">
    <property type="method" value="EM"/>
    <property type="resolution" value="3.60 A"/>
    <property type="chains" value="S=2-101"/>
</dbReference>
<dbReference type="PDB" id="6WD4">
    <property type="method" value="EM"/>
    <property type="resolution" value="3.70 A"/>
    <property type="chains" value="S=2-101"/>
</dbReference>
<dbReference type="PDB" id="6WD5">
    <property type="method" value="EM"/>
    <property type="resolution" value="3.60 A"/>
    <property type="chains" value="S=2-101"/>
</dbReference>
<dbReference type="PDB" id="6WD6">
    <property type="method" value="EM"/>
    <property type="resolution" value="3.70 A"/>
    <property type="chains" value="S=2-101"/>
</dbReference>
<dbReference type="PDB" id="6WD7">
    <property type="method" value="EM"/>
    <property type="resolution" value="3.90 A"/>
    <property type="chains" value="S=2-101"/>
</dbReference>
<dbReference type="PDB" id="6WD8">
    <property type="method" value="EM"/>
    <property type="resolution" value="3.70 A"/>
    <property type="chains" value="S=2-101"/>
</dbReference>
<dbReference type="PDB" id="6WD9">
    <property type="method" value="EM"/>
    <property type="resolution" value="3.70 A"/>
    <property type="chains" value="S=2-101"/>
</dbReference>
<dbReference type="PDB" id="6WDA">
    <property type="method" value="EM"/>
    <property type="resolution" value="3.80 A"/>
    <property type="chains" value="S=2-101"/>
</dbReference>
<dbReference type="PDB" id="6WDB">
    <property type="method" value="EM"/>
    <property type="resolution" value="4.00 A"/>
    <property type="chains" value="S=2-101"/>
</dbReference>
<dbReference type="PDB" id="6WDC">
    <property type="method" value="EM"/>
    <property type="resolution" value="4.20 A"/>
    <property type="chains" value="S=2-101"/>
</dbReference>
<dbReference type="PDB" id="6WDD">
    <property type="method" value="EM"/>
    <property type="resolution" value="3.20 A"/>
    <property type="chains" value="S=2-101"/>
</dbReference>
<dbReference type="PDB" id="6WDE">
    <property type="method" value="EM"/>
    <property type="resolution" value="3.00 A"/>
    <property type="chains" value="S=2-101"/>
</dbReference>
<dbReference type="PDB" id="6WDF">
    <property type="method" value="EM"/>
    <property type="resolution" value="3.30 A"/>
    <property type="chains" value="S=2-101"/>
</dbReference>
<dbReference type="PDB" id="6WDG">
    <property type="method" value="EM"/>
    <property type="resolution" value="3.30 A"/>
    <property type="chains" value="S=2-101"/>
</dbReference>
<dbReference type="PDB" id="6WDH">
    <property type="method" value="EM"/>
    <property type="resolution" value="4.30 A"/>
    <property type="chains" value="S=2-101"/>
</dbReference>
<dbReference type="PDB" id="6WDI">
    <property type="method" value="EM"/>
    <property type="resolution" value="4.00 A"/>
    <property type="chains" value="S=2-101"/>
</dbReference>
<dbReference type="PDB" id="6WDJ">
    <property type="method" value="EM"/>
    <property type="resolution" value="3.70 A"/>
    <property type="chains" value="S=2-101"/>
</dbReference>
<dbReference type="PDB" id="6WDK">
    <property type="method" value="EM"/>
    <property type="resolution" value="3.60 A"/>
    <property type="chains" value="S=2-101"/>
</dbReference>
<dbReference type="PDB" id="6WDL">
    <property type="method" value="EM"/>
    <property type="resolution" value="3.70 A"/>
    <property type="chains" value="S=2-101"/>
</dbReference>
<dbReference type="PDB" id="6WDM">
    <property type="method" value="EM"/>
    <property type="resolution" value="3.60 A"/>
    <property type="chains" value="S=2-101"/>
</dbReference>
<dbReference type="PDB" id="6WNV">
    <property type="method" value="EM"/>
    <property type="resolution" value="3.50 A"/>
    <property type="chains" value="S=2-101"/>
</dbReference>
<dbReference type="PDB" id="6WNW">
    <property type="method" value="EM"/>
    <property type="resolution" value="3.20 A"/>
    <property type="chains" value="S=2-101"/>
</dbReference>
<dbReference type="PDB" id="6X6T">
    <property type="method" value="EM"/>
    <property type="resolution" value="3.20 A"/>
    <property type="chains" value="S=1-101"/>
</dbReference>
<dbReference type="PDB" id="6X7F">
    <property type="method" value="EM"/>
    <property type="resolution" value="3.50 A"/>
    <property type="chains" value="S=1-101"/>
</dbReference>
<dbReference type="PDB" id="6X7K">
    <property type="method" value="EM"/>
    <property type="resolution" value="3.10 A"/>
    <property type="chains" value="S=1-101"/>
</dbReference>
<dbReference type="PDB" id="6X9Q">
    <property type="method" value="EM"/>
    <property type="resolution" value="4.80 A"/>
    <property type="chains" value="S=1-101"/>
</dbReference>
<dbReference type="PDB" id="6XDQ">
    <property type="method" value="EM"/>
    <property type="resolution" value="3.70 A"/>
    <property type="chains" value="S=1-101"/>
</dbReference>
<dbReference type="PDB" id="6XDR">
    <property type="method" value="EM"/>
    <property type="resolution" value="4.70 A"/>
    <property type="chains" value="S=1-101"/>
</dbReference>
<dbReference type="PDB" id="6XE0">
    <property type="method" value="EM"/>
    <property type="resolution" value="6.80 A"/>
    <property type="chains" value="M=2-101"/>
</dbReference>
<dbReference type="PDB" id="6XGF">
    <property type="method" value="EM"/>
    <property type="resolution" value="5.00 A"/>
    <property type="chains" value="S=1-101"/>
</dbReference>
<dbReference type="PDB" id="6XII">
    <property type="method" value="EM"/>
    <property type="resolution" value="7.00 A"/>
    <property type="chains" value="S=1-101"/>
</dbReference>
<dbReference type="PDB" id="6XIJ">
    <property type="method" value="EM"/>
    <property type="resolution" value="8.00 A"/>
    <property type="chains" value="S=1-101"/>
</dbReference>
<dbReference type="PDB" id="6XZA">
    <property type="method" value="EM"/>
    <property type="resolution" value="2.66 A"/>
    <property type="chains" value="N1=2-101"/>
</dbReference>
<dbReference type="PDB" id="6XZB">
    <property type="method" value="EM"/>
    <property type="resolution" value="2.54 A"/>
    <property type="chains" value="N1=2-101"/>
</dbReference>
<dbReference type="PDB" id="6Y69">
    <property type="method" value="EM"/>
    <property type="resolution" value="2.86 A"/>
    <property type="chains" value="n=2-101"/>
</dbReference>
<dbReference type="PDB" id="6ZTJ">
    <property type="method" value="EM"/>
    <property type="resolution" value="3.40 A"/>
    <property type="chains" value="AN=1-101"/>
</dbReference>
<dbReference type="PDB" id="6ZTL">
    <property type="method" value="EM"/>
    <property type="resolution" value="3.50 A"/>
    <property type="chains" value="AN=1-101"/>
</dbReference>
<dbReference type="PDB" id="6ZTM">
    <property type="method" value="EM"/>
    <property type="resolution" value="3.30 A"/>
    <property type="chains" value="AN=1-101"/>
</dbReference>
<dbReference type="PDB" id="6ZTN">
    <property type="method" value="EM"/>
    <property type="resolution" value="3.90 A"/>
    <property type="chains" value="AN=1-101"/>
</dbReference>
<dbReference type="PDB" id="6ZTO">
    <property type="method" value="EM"/>
    <property type="resolution" value="3.00 A"/>
    <property type="chains" value="AN=1-101"/>
</dbReference>
<dbReference type="PDB" id="6ZTP">
    <property type="method" value="EM"/>
    <property type="resolution" value="3.00 A"/>
    <property type="chains" value="AN=1-101"/>
</dbReference>
<dbReference type="PDB" id="6ZU1">
    <property type="method" value="EM"/>
    <property type="resolution" value="3.00 A"/>
    <property type="chains" value="AN=1-101"/>
</dbReference>
<dbReference type="PDB" id="7ABZ">
    <property type="method" value="EM"/>
    <property type="resolution" value="3.21 A"/>
    <property type="chains" value="s=2-101"/>
</dbReference>
<dbReference type="PDB" id="7AC7">
    <property type="method" value="EM"/>
    <property type="resolution" value="3.08 A"/>
    <property type="chains" value="s=2-101"/>
</dbReference>
<dbReference type="PDB" id="7ACJ">
    <property type="method" value="EM"/>
    <property type="resolution" value="3.20 A"/>
    <property type="chains" value="s=2-101"/>
</dbReference>
<dbReference type="PDB" id="7ACR">
    <property type="method" value="EM"/>
    <property type="resolution" value="3.44 A"/>
    <property type="chains" value="s=2-101"/>
</dbReference>
<dbReference type="PDB" id="7AF3">
    <property type="method" value="EM"/>
    <property type="resolution" value="2.82 A"/>
    <property type="chains" value="N=1-101"/>
</dbReference>
<dbReference type="PDB" id="7AF5">
    <property type="method" value="EM"/>
    <property type="resolution" value="2.96 A"/>
    <property type="chains" value="N=1-101"/>
</dbReference>
<dbReference type="PDB" id="7AF8">
    <property type="method" value="EM"/>
    <property type="resolution" value="2.75 A"/>
    <property type="chains" value="N=1-101"/>
</dbReference>
<dbReference type="PDB" id="7AFA">
    <property type="method" value="EM"/>
    <property type="resolution" value="2.95 A"/>
    <property type="chains" value="N=1-101"/>
</dbReference>
<dbReference type="PDB" id="7AFD">
    <property type="method" value="EM"/>
    <property type="resolution" value="3.44 A"/>
    <property type="chains" value="N=1-101"/>
</dbReference>
<dbReference type="PDB" id="7AFH">
    <property type="method" value="EM"/>
    <property type="resolution" value="3.59 A"/>
    <property type="chains" value="N=1-101"/>
</dbReference>
<dbReference type="PDB" id="7AFK">
    <property type="method" value="EM"/>
    <property type="resolution" value="4.90 A"/>
    <property type="chains" value="N=1-101"/>
</dbReference>
<dbReference type="PDB" id="7AFN">
    <property type="method" value="EM"/>
    <property type="resolution" value="3.86 A"/>
    <property type="chains" value="N=1-101"/>
</dbReference>
<dbReference type="PDB" id="7B5K">
    <property type="method" value="EM"/>
    <property type="resolution" value="2.90 A"/>
    <property type="chains" value="n=2-101"/>
</dbReference>
<dbReference type="PDB" id="7BOE">
    <property type="method" value="EM"/>
    <property type="resolution" value="2.90 A"/>
    <property type="chains" value="N=1-101"/>
</dbReference>
<dbReference type="PDB" id="7BOH">
    <property type="method" value="EM"/>
    <property type="resolution" value="2.82 A"/>
    <property type="chains" value="N=1-101"/>
</dbReference>
<dbReference type="PDB" id="7D6Z">
    <property type="method" value="EM"/>
    <property type="resolution" value="3.40 A"/>
    <property type="chains" value="u=1-101"/>
</dbReference>
<dbReference type="PDB" id="7D80">
    <property type="method" value="EM"/>
    <property type="resolution" value="4.10 A"/>
    <property type="chains" value="O=1-101"/>
</dbReference>
<dbReference type="PDB" id="7JSS">
    <property type="method" value="EM"/>
    <property type="resolution" value="3.70 A"/>
    <property type="chains" value="S=2-101"/>
</dbReference>
<dbReference type="PDB" id="7JSW">
    <property type="method" value="EM"/>
    <property type="resolution" value="3.80 A"/>
    <property type="chains" value="S=2-101"/>
</dbReference>
<dbReference type="PDB" id="7JSZ">
    <property type="method" value="EM"/>
    <property type="resolution" value="3.70 A"/>
    <property type="chains" value="S=2-101"/>
</dbReference>
<dbReference type="PDB" id="7JT1">
    <property type="method" value="EM"/>
    <property type="resolution" value="3.30 A"/>
    <property type="chains" value="S=2-101"/>
</dbReference>
<dbReference type="PDB" id="7JT2">
    <property type="method" value="EM"/>
    <property type="resolution" value="3.50 A"/>
    <property type="chains" value="S=2-101"/>
</dbReference>
<dbReference type="PDB" id="7JT3">
    <property type="method" value="EM"/>
    <property type="resolution" value="3.70 A"/>
    <property type="chains" value="S=2-101"/>
</dbReference>
<dbReference type="PDB" id="7K00">
    <property type="method" value="EM"/>
    <property type="resolution" value="1.98 A"/>
    <property type="chains" value="N=1-101"/>
</dbReference>
<dbReference type="PDB" id="7K50">
    <property type="method" value="EM"/>
    <property type="resolution" value="3.40 A"/>
    <property type="chains" value="S=2-101"/>
</dbReference>
<dbReference type="PDB" id="7K51">
    <property type="method" value="EM"/>
    <property type="resolution" value="3.50 A"/>
    <property type="chains" value="S=2-101"/>
</dbReference>
<dbReference type="PDB" id="7K52">
    <property type="method" value="EM"/>
    <property type="resolution" value="3.40 A"/>
    <property type="chains" value="S=2-101"/>
</dbReference>
<dbReference type="PDB" id="7K53">
    <property type="method" value="EM"/>
    <property type="resolution" value="3.20 A"/>
    <property type="chains" value="S=2-101"/>
</dbReference>
<dbReference type="PDB" id="7K54">
    <property type="method" value="EM"/>
    <property type="resolution" value="3.20 A"/>
    <property type="chains" value="S=2-101"/>
</dbReference>
<dbReference type="PDB" id="7K55">
    <property type="method" value="EM"/>
    <property type="resolution" value="3.30 A"/>
    <property type="chains" value="S=2-101"/>
</dbReference>
<dbReference type="PDB" id="7LV0">
    <property type="method" value="EM"/>
    <property type="resolution" value="3.20 A"/>
    <property type="chains" value="S=2-101"/>
</dbReference>
<dbReference type="PDB" id="7M5D">
    <property type="method" value="EM"/>
    <property type="resolution" value="2.80 A"/>
    <property type="chains" value="s=2-101"/>
</dbReference>
<dbReference type="PDB" id="7N1P">
    <property type="method" value="EM"/>
    <property type="resolution" value="2.33 A"/>
    <property type="chains" value="SN=1-101"/>
</dbReference>
<dbReference type="PDB" id="7N2C">
    <property type="method" value="EM"/>
    <property type="resolution" value="2.72 A"/>
    <property type="chains" value="SN=1-101"/>
</dbReference>
<dbReference type="PDB" id="7N2U">
    <property type="method" value="EM"/>
    <property type="resolution" value="2.53 A"/>
    <property type="chains" value="SN=1-101"/>
</dbReference>
<dbReference type="PDB" id="7N2V">
    <property type="method" value="EM"/>
    <property type="resolution" value="2.54 A"/>
    <property type="chains" value="SN=1-101"/>
</dbReference>
<dbReference type="PDB" id="7N30">
    <property type="method" value="EM"/>
    <property type="resolution" value="2.66 A"/>
    <property type="chains" value="SN=1-101"/>
</dbReference>
<dbReference type="PDB" id="7N31">
    <property type="method" value="EM"/>
    <property type="resolution" value="2.69 A"/>
    <property type="chains" value="SN=1-101"/>
</dbReference>
<dbReference type="PDB" id="7NAR">
    <property type="method" value="EM"/>
    <property type="resolution" value="3.00 A"/>
    <property type="chains" value="N=1-101"/>
</dbReference>
<dbReference type="PDB" id="7NAT">
    <property type="method" value="EM"/>
    <property type="resolution" value="3.59 A"/>
    <property type="chains" value="N=1-101"/>
</dbReference>
<dbReference type="PDB" id="7NAU">
    <property type="method" value="EM"/>
    <property type="resolution" value="3.78 A"/>
    <property type="chains" value="N=1-101"/>
</dbReference>
<dbReference type="PDB" id="7NAV">
    <property type="method" value="EM"/>
    <property type="resolution" value="4.80 A"/>
    <property type="chains" value="N=1-101"/>
</dbReference>
<dbReference type="PDB" id="7NAX">
    <property type="method" value="EM"/>
    <property type="resolution" value="2.96 A"/>
    <property type="chains" value="N=1-101"/>
</dbReference>
<dbReference type="PDB" id="7NBU">
    <property type="method" value="EM"/>
    <property type="resolution" value="3.11 A"/>
    <property type="chains" value="N=2-101"/>
</dbReference>
<dbReference type="PDB" id="7O19">
    <property type="method" value="EM"/>
    <property type="resolution" value="2.90 A"/>
    <property type="chains" value="AN=1-101"/>
</dbReference>
<dbReference type="PDB" id="7O1A">
    <property type="method" value="EM"/>
    <property type="resolution" value="2.40 A"/>
    <property type="chains" value="AN=1-101"/>
</dbReference>
<dbReference type="PDB" id="7O1C">
    <property type="method" value="EM"/>
    <property type="resolution" value="2.60 A"/>
    <property type="chains" value="AN=1-101"/>
</dbReference>
<dbReference type="PDB" id="7OE0">
    <property type="method" value="EM"/>
    <property type="resolution" value="2.69 A"/>
    <property type="chains" value="N=2-101"/>
</dbReference>
<dbReference type="PDB" id="7OE1">
    <property type="method" value="EM"/>
    <property type="resolution" value="3.05 A"/>
    <property type="chains" value="N=2-101"/>
</dbReference>
<dbReference type="PDB" id="7OIZ">
    <property type="method" value="EM"/>
    <property type="resolution" value="2.90 A"/>
    <property type="chains" value="N=1-101"/>
</dbReference>
<dbReference type="PDB" id="7OJ0">
    <property type="method" value="EM"/>
    <property type="resolution" value="3.50 A"/>
    <property type="chains" value="N=1-101"/>
</dbReference>
<dbReference type="PDB" id="7P3K">
    <property type="method" value="EM"/>
    <property type="resolution" value="2.90 A"/>
    <property type="chains" value="N=1-101"/>
</dbReference>
<dbReference type="PDB" id="7PJU">
    <property type="method" value="EM"/>
    <property type="resolution" value="9.50 A"/>
    <property type="chains" value="n=1-101"/>
</dbReference>
<dbReference type="PDB" id="7PJV">
    <property type="method" value="EM"/>
    <property type="resolution" value="3.10 A"/>
    <property type="chains" value="n=1-101"/>
</dbReference>
<dbReference type="PDB" id="7PJY">
    <property type="method" value="EM"/>
    <property type="resolution" value="3.10 A"/>
    <property type="chains" value="n=1-101"/>
</dbReference>
<dbReference type="PDB" id="7QG8">
    <property type="method" value="EM"/>
    <property type="resolution" value="3.97 A"/>
    <property type="chains" value="G=1-101"/>
</dbReference>
<dbReference type="PDB" id="7QGH">
    <property type="method" value="EM"/>
    <property type="resolution" value="4.48 A"/>
    <property type="chains" value="E=1-101"/>
</dbReference>
<dbReference type="PDB" id="7QGN">
    <property type="method" value="EM"/>
    <property type="resolution" value="3.37 A"/>
    <property type="chains" value="G=1-101"/>
</dbReference>
<dbReference type="PDB" id="7QGR">
    <property type="method" value="EM"/>
    <property type="resolution" value="5.70 A"/>
    <property type="chains" value="E=1-101"/>
</dbReference>
<dbReference type="PDB" id="7S1G">
    <property type="method" value="EM"/>
    <property type="resolution" value="2.48 A"/>
    <property type="chains" value="v=1-101"/>
</dbReference>
<dbReference type="PDB" id="7S1H">
    <property type="method" value="EM"/>
    <property type="resolution" value="2.35 A"/>
    <property type="chains" value="v=1-101"/>
</dbReference>
<dbReference type="PDB" id="7S1I">
    <property type="method" value="EM"/>
    <property type="resolution" value="2.48 A"/>
    <property type="chains" value="v=1-101"/>
</dbReference>
<dbReference type="PDB" id="7S1J">
    <property type="method" value="EM"/>
    <property type="resolution" value="2.47 A"/>
    <property type="chains" value="v=1-101"/>
</dbReference>
<dbReference type="PDB" id="7S1K">
    <property type="method" value="EM"/>
    <property type="resolution" value="2.42 A"/>
    <property type="chains" value="v=1-101"/>
</dbReference>
<dbReference type="PDB" id="7SA4">
    <property type="method" value="EM"/>
    <property type="resolution" value="2.55 A"/>
    <property type="chains" value="s=1-101"/>
</dbReference>
<dbReference type="PDB" id="7SS9">
    <property type="method" value="EM"/>
    <property type="resolution" value="3.90 A"/>
    <property type="chains" value="S=2-101"/>
</dbReference>
<dbReference type="PDB" id="7SSD">
    <property type="method" value="EM"/>
    <property type="resolution" value="3.30 A"/>
    <property type="chains" value="S=2-101"/>
</dbReference>
<dbReference type="PDB" id="7SSL">
    <property type="method" value="EM"/>
    <property type="resolution" value="3.80 A"/>
    <property type="chains" value="S=2-101"/>
</dbReference>
<dbReference type="PDB" id="7SSN">
    <property type="method" value="EM"/>
    <property type="resolution" value="3.20 A"/>
    <property type="chains" value="S=2-101"/>
</dbReference>
<dbReference type="PDB" id="7SSO">
    <property type="method" value="EM"/>
    <property type="resolution" value="3.20 A"/>
    <property type="chains" value="S=2-101"/>
</dbReference>
<dbReference type="PDB" id="7SSW">
    <property type="method" value="EM"/>
    <property type="resolution" value="3.80 A"/>
    <property type="chains" value="S=2-101"/>
</dbReference>
<dbReference type="PDB" id="7ST2">
    <property type="method" value="EM"/>
    <property type="resolution" value="2.90 A"/>
    <property type="chains" value="S=2-101"/>
</dbReference>
<dbReference type="PDB" id="7ST6">
    <property type="method" value="EM"/>
    <property type="resolution" value="3.00 A"/>
    <property type="chains" value="S=2-101"/>
</dbReference>
<dbReference type="PDB" id="7ST7">
    <property type="method" value="EM"/>
    <property type="resolution" value="3.20 A"/>
    <property type="chains" value="S=2-101"/>
</dbReference>
<dbReference type="PDB" id="7TOS">
    <property type="method" value="EM"/>
    <property type="resolution" value="2.90 A"/>
    <property type="chains" value="S14=2-101"/>
</dbReference>
<dbReference type="PDB" id="7UG7">
    <property type="method" value="EM"/>
    <property type="resolution" value="2.58 A"/>
    <property type="chains" value="SN=1-101"/>
</dbReference>
<dbReference type="PDB" id="7UPH">
    <property type="method" value="EM"/>
    <property type="resolution" value="4.18 A"/>
    <property type="chains" value="A=2-101"/>
</dbReference>
<dbReference type="PDB" id="7Y7C">
    <property type="method" value="EM"/>
    <property type="resolution" value="2.51 A"/>
    <property type="chains" value="N=1-101"/>
</dbReference>
<dbReference type="PDB" id="7Y7D">
    <property type="method" value="EM"/>
    <property type="resolution" value="2.58 A"/>
    <property type="chains" value="N=1-101"/>
</dbReference>
<dbReference type="PDB" id="7Y7E">
    <property type="method" value="EM"/>
    <property type="resolution" value="2.41 A"/>
    <property type="chains" value="N=1-101"/>
</dbReference>
<dbReference type="PDB" id="7Y7F">
    <property type="method" value="EM"/>
    <property type="resolution" value="2.43 A"/>
    <property type="chains" value="N=1-101"/>
</dbReference>
<dbReference type="PDB" id="7Y7G">
    <property type="method" value="EM"/>
    <property type="resolution" value="2.34 A"/>
    <property type="chains" value="N=1-101"/>
</dbReference>
<dbReference type="PDB" id="7Y7H">
    <property type="method" value="EM"/>
    <property type="resolution" value="2.51 A"/>
    <property type="chains" value="N=1-101"/>
</dbReference>
<dbReference type="PDB" id="7ZTA">
    <property type="method" value="EM"/>
    <property type="resolution" value="2.70 A"/>
    <property type="chains" value="S141=2-101"/>
</dbReference>
<dbReference type="PDB" id="8A3L">
    <property type="method" value="EM"/>
    <property type="resolution" value="3.42 A"/>
    <property type="chains" value="N=1-101"/>
</dbReference>
<dbReference type="PDB" id="8AKN">
    <property type="method" value="EM"/>
    <property type="resolution" value="2.30 A"/>
    <property type="chains" value="O=1-101"/>
</dbReference>
<dbReference type="PDB" id="8AM9">
    <property type="method" value="EM"/>
    <property type="resolution" value="2.80 A"/>
    <property type="chains" value="O=1-101"/>
</dbReference>
<dbReference type="PDB" id="8AYE">
    <property type="method" value="EM"/>
    <property type="resolution" value="1.96 A"/>
    <property type="chains" value="N=1-101"/>
</dbReference>
<dbReference type="PDB" id="8B0X">
    <property type="method" value="EM"/>
    <property type="resolution" value="1.55 A"/>
    <property type="chains" value="N=1-101"/>
</dbReference>
<dbReference type="PDB" id="8B7Y">
    <property type="method" value="EM"/>
    <property type="resolution" value="3.00 A"/>
    <property type="chains" value="s=1-101"/>
</dbReference>
<dbReference type="PDB" id="8BF7">
    <property type="method" value="EM"/>
    <property type="resolution" value="2.33 A"/>
    <property type="chains" value="r=1-101"/>
</dbReference>
<dbReference type="PDB" id="8BGE">
    <property type="method" value="EM"/>
    <property type="resolution" value="2.11 A"/>
    <property type="chains" value="r=1-101"/>
</dbReference>
<dbReference type="PDB" id="8BGH">
    <property type="method" value="EM"/>
    <property type="resolution" value="2.88 A"/>
    <property type="chains" value="r=1-101"/>
</dbReference>
<dbReference type="PDB" id="8BH4">
    <property type="method" value="EM"/>
    <property type="resolution" value="2.62 A"/>
    <property type="chains" value="r=1-101"/>
</dbReference>
<dbReference type="PDB" id="8BHJ">
    <property type="method" value="EM"/>
    <property type="resolution" value="2.81 A"/>
    <property type="chains" value="r=1-101"/>
</dbReference>
<dbReference type="PDB" id="8BHL">
    <property type="method" value="EM"/>
    <property type="resolution" value="2.21 A"/>
    <property type="chains" value="r=1-101"/>
</dbReference>
<dbReference type="PDB" id="8BHN">
    <property type="method" value="EM"/>
    <property type="resolution" value="2.85 A"/>
    <property type="chains" value="r=1-101"/>
</dbReference>
<dbReference type="PDB" id="8BHP">
    <property type="method" value="EM"/>
    <property type="resolution" value="2.37 A"/>
    <property type="chains" value="r=1-101"/>
</dbReference>
<dbReference type="PDB" id="8BIL">
    <property type="method" value="EM"/>
    <property type="resolution" value="2.04 A"/>
    <property type="chains" value="r=1-101"/>
</dbReference>
<dbReference type="PDB" id="8BIM">
    <property type="method" value="EM"/>
    <property type="resolution" value="2.04 A"/>
    <property type="chains" value="r=1-101"/>
</dbReference>
<dbReference type="PDB" id="8CA7">
    <property type="method" value="EM"/>
    <property type="resolution" value="2.06 A"/>
    <property type="chains" value="N=1-101"/>
</dbReference>
<dbReference type="PDB" id="8CAZ">
    <property type="method" value="EM"/>
    <property type="resolution" value="2.11 A"/>
    <property type="chains" value="N=1-101"/>
</dbReference>
<dbReference type="PDB" id="8CF1">
    <property type="method" value="EM"/>
    <property type="resolution" value="1.82 A"/>
    <property type="chains" value="N=1-101"/>
</dbReference>
<dbReference type="PDB" id="8CF8">
    <property type="method" value="EM"/>
    <property type="resolution" value="2.20 A"/>
    <property type="chains" value="N=1-101"/>
</dbReference>
<dbReference type="PDB" id="8CGI">
    <property type="method" value="EM"/>
    <property type="resolution" value="1.89 A"/>
    <property type="chains" value="N=1-101"/>
</dbReference>
<dbReference type="PDB" id="8EIU">
    <property type="method" value="EM"/>
    <property type="resolution" value="2.24 A"/>
    <property type="chains" value="N=1-101"/>
</dbReference>
<dbReference type="PDB" id="8EKC">
    <property type="method" value="EM"/>
    <property type="resolution" value="2.70 A"/>
    <property type="chains" value="n=1-101"/>
</dbReference>
<dbReference type="PDB" id="8EMM">
    <property type="method" value="EM"/>
    <property type="resolution" value="2.10 A"/>
    <property type="chains" value="N=1-101"/>
</dbReference>
<dbReference type="PDB" id="8EYQ">
    <property type="method" value="EM"/>
    <property type="resolution" value="3.30 A"/>
    <property type="chains" value="N=1-101"/>
</dbReference>
<dbReference type="PDB" id="8EYT">
    <property type="method" value="EM"/>
    <property type="resolution" value="2.80 A"/>
    <property type="chains" value="N=1-101"/>
</dbReference>
<dbReference type="PDB" id="8FIZ">
    <property type="method" value="EM"/>
    <property type="resolution" value="3.80 A"/>
    <property type="chains" value="AF=1-101"/>
</dbReference>
<dbReference type="PDB" id="8FTO">
    <property type="method" value="EM"/>
    <property type="resolution" value="1.85 A"/>
    <property type="chains" value="N=1-101"/>
</dbReference>
<dbReference type="PDB" id="8FZD">
    <property type="method" value="EM"/>
    <property type="resolution" value="3.10 A"/>
    <property type="chains" value="n=1-101"/>
</dbReference>
<dbReference type="PDB" id="8FZE">
    <property type="method" value="EM"/>
    <property type="resolution" value="3.00 A"/>
    <property type="chains" value="n=1-101"/>
</dbReference>
<dbReference type="PDB" id="8FZF">
    <property type="method" value="EM"/>
    <property type="resolution" value="3.20 A"/>
    <property type="chains" value="n=1-101"/>
</dbReference>
<dbReference type="PDB" id="8FZG">
    <property type="method" value="EM"/>
    <property type="resolution" value="3.10 A"/>
    <property type="chains" value="n=1-101"/>
</dbReference>
<dbReference type="PDB" id="8FZH">
    <property type="method" value="EM"/>
    <property type="resolution" value="2.90 A"/>
    <property type="chains" value="n=1-101"/>
</dbReference>
<dbReference type="PDB" id="8FZI">
    <property type="method" value="EM"/>
    <property type="resolution" value="3.10 A"/>
    <property type="chains" value="n=1-101"/>
</dbReference>
<dbReference type="PDB" id="8FZJ">
    <property type="method" value="EM"/>
    <property type="resolution" value="3.00 A"/>
    <property type="chains" value="n=1-101"/>
</dbReference>
<dbReference type="PDB" id="8G2U">
    <property type="method" value="EM"/>
    <property type="resolution" value="3.00 A"/>
    <property type="chains" value="m=2-101"/>
</dbReference>
<dbReference type="PDB" id="8G31">
    <property type="method" value="EM"/>
    <property type="resolution" value="3.20 A"/>
    <property type="chains" value="m=2-101"/>
</dbReference>
<dbReference type="PDB" id="8G34">
    <property type="method" value="EM"/>
    <property type="resolution" value="3.20 A"/>
    <property type="chains" value="m=2-101"/>
</dbReference>
<dbReference type="PDB" id="8G38">
    <property type="method" value="EM"/>
    <property type="resolution" value="3.20 A"/>
    <property type="chains" value="m=2-101"/>
</dbReference>
<dbReference type="PDB" id="8G6W">
    <property type="method" value="EM"/>
    <property type="resolution" value="2.02 A"/>
    <property type="chains" value="N=1-101"/>
</dbReference>
<dbReference type="PDB" id="8G7P">
    <property type="method" value="EM"/>
    <property type="resolution" value="2.90 A"/>
    <property type="chains" value="n=1-101"/>
</dbReference>
<dbReference type="PDB" id="8G7Q">
    <property type="method" value="EM"/>
    <property type="resolution" value="3.10 A"/>
    <property type="chains" value="n=1-101"/>
</dbReference>
<dbReference type="PDB" id="8G7R">
    <property type="method" value="EM"/>
    <property type="resolution" value="2.80 A"/>
    <property type="chains" value="n=1-101"/>
</dbReference>
<dbReference type="PDB" id="8G7S">
    <property type="method" value="EM"/>
    <property type="resolution" value="3.10 A"/>
    <property type="chains" value="n=1-101"/>
</dbReference>
<dbReference type="PDB" id="8HSP">
    <property type="method" value="EM"/>
    <property type="resolution" value="2.32 A"/>
    <property type="chains" value="N=1-101"/>
</dbReference>
<dbReference type="PDB" id="8HTZ">
    <property type="method" value="EM"/>
    <property type="resolution" value="2.40 A"/>
    <property type="chains" value="N=1-101"/>
</dbReference>
<dbReference type="PDB" id="8HU1">
    <property type="method" value="EM"/>
    <property type="resolution" value="2.69 A"/>
    <property type="chains" value="N=1-101"/>
</dbReference>
<dbReference type="PDB" id="8IFB">
    <property type="method" value="EM"/>
    <property type="resolution" value="2.43 A"/>
    <property type="chains" value="N=1-101"/>
</dbReference>
<dbReference type="PDB" id="8IFC">
    <property type="method" value="EM"/>
    <property type="resolution" value="2.90 A"/>
    <property type="chains" value="N=1-101"/>
</dbReference>
<dbReference type="PDB" id="8JSG">
    <property type="method" value="EM"/>
    <property type="resolution" value="4.60 A"/>
    <property type="chains" value="w=2-101"/>
</dbReference>
<dbReference type="PDB" id="8K3O">
    <property type="method" value="EM"/>
    <property type="resolution" value="3.88 A"/>
    <property type="chains" value="N=1-101"/>
</dbReference>
<dbReference type="PDB" id="8K4E">
    <property type="method" value="EM"/>
    <property type="resolution" value="3.40 A"/>
    <property type="chains" value="N=1-101"/>
</dbReference>
<dbReference type="PDB" id="8P16">
    <property type="method" value="EM"/>
    <property type="resolution" value="2.77 A"/>
    <property type="chains" value="s=1-101"/>
</dbReference>
<dbReference type="PDB" id="8P17">
    <property type="method" value="EM"/>
    <property type="resolution" value="2.78 A"/>
    <property type="chains" value="s=1-101"/>
</dbReference>
<dbReference type="PDB" id="8P18">
    <property type="method" value="EM"/>
    <property type="resolution" value="2.77 A"/>
    <property type="chains" value="s=1-101"/>
</dbReference>
<dbReference type="PDB" id="8PEG">
    <property type="method" value="EM"/>
    <property type="resolution" value="3.30 A"/>
    <property type="chains" value="N=1-101"/>
</dbReference>
<dbReference type="PDB" id="8PHJ">
    <property type="method" value="EM"/>
    <property type="resolution" value="3.67 A"/>
    <property type="chains" value="N=1-101"/>
</dbReference>
<dbReference type="PDB" id="8PKL">
    <property type="method" value="EM"/>
    <property type="resolution" value="3.09 A"/>
    <property type="chains" value="N=1-101"/>
</dbReference>
<dbReference type="PDB" id="8PVA">
    <property type="method" value="EM"/>
    <property type="resolution" value="4.50 A"/>
    <property type="chains" value="N=1-101"/>
</dbReference>
<dbReference type="PDB" id="8Q4F">
    <property type="method" value="EM"/>
    <property type="resolution" value="3.10 A"/>
    <property type="chains" value="N=1-101"/>
</dbReference>
<dbReference type="PDB" id="8QBT">
    <property type="method" value="EM"/>
    <property type="resolution" value="2.20 A"/>
    <property type="chains" value="v=1-101"/>
</dbReference>
<dbReference type="PDB" id="8QK7">
    <property type="method" value="EM"/>
    <property type="resolution" value="2.77 A"/>
    <property type="chains" value="s=1-101"/>
</dbReference>
<dbReference type="PDB" id="8QOA">
    <property type="method" value="EM"/>
    <property type="resolution" value="2.00 A"/>
    <property type="chains" value="N=1-101"/>
</dbReference>
<dbReference type="PDB" id="8R3V">
    <property type="method" value="EM"/>
    <property type="resolution" value="3.28 A"/>
    <property type="chains" value="N1/N2=1-101"/>
</dbReference>
<dbReference type="PDB" id="8R6C">
    <property type="method" value="EM"/>
    <property type="resolution" value="2.20 A"/>
    <property type="chains" value="N=1-101"/>
</dbReference>
<dbReference type="PDB" id="8R8M">
    <property type="method" value="EM"/>
    <property type="resolution" value="2.40 A"/>
    <property type="chains" value="N=1-101"/>
</dbReference>
<dbReference type="PDB" id="8RCL">
    <property type="method" value="EM"/>
    <property type="resolution" value="3.49 A"/>
    <property type="chains" value="N1/N2=1-101"/>
</dbReference>
<dbReference type="PDB" id="8RCM">
    <property type="method" value="EM"/>
    <property type="resolution" value="3.59 A"/>
    <property type="chains" value="N1/N2=1-101"/>
</dbReference>
<dbReference type="PDB" id="8RCS">
    <property type="method" value="EM"/>
    <property type="resolution" value="4.46 A"/>
    <property type="chains" value="N1/N2=1-101"/>
</dbReference>
<dbReference type="PDB" id="8RCT">
    <property type="method" value="EM"/>
    <property type="resolution" value="5.32 A"/>
    <property type="chains" value="N1/N2=1-101"/>
</dbReference>
<dbReference type="PDB" id="8SYL">
    <property type="method" value="EM"/>
    <property type="resolution" value="2.90 A"/>
    <property type="chains" value="n=1-101"/>
</dbReference>
<dbReference type="PDB" id="8T5D">
    <property type="method" value="EM"/>
    <property type="resolution" value="3.20 A"/>
    <property type="chains" value="m=2-101"/>
</dbReference>
<dbReference type="PDB" id="8T5H">
    <property type="method" value="EM"/>
    <property type="resolution" value="3.30 A"/>
    <property type="chains" value="m=2-101"/>
</dbReference>
<dbReference type="PDB" id="8UPO">
    <property type="method" value="EM"/>
    <property type="resolution" value="5.50 A"/>
    <property type="chains" value="S=1-101"/>
</dbReference>
<dbReference type="PDB" id="8UPR">
    <property type="method" value="EM"/>
    <property type="resolution" value="5.30 A"/>
    <property type="chains" value="S=1-101"/>
</dbReference>
<dbReference type="PDB" id="8UQL">
    <property type="method" value="EM"/>
    <property type="resolution" value="3.20 A"/>
    <property type="chains" value="S=1-101"/>
</dbReference>
<dbReference type="PDB" id="8UQM">
    <property type="method" value="EM"/>
    <property type="resolution" value="5.30 A"/>
    <property type="chains" value="S=1-101"/>
</dbReference>
<dbReference type="PDB" id="8UQP">
    <property type="method" value="EM"/>
    <property type="resolution" value="3.80 A"/>
    <property type="chains" value="S=1-101"/>
</dbReference>
<dbReference type="PDB" id="8UR0">
    <property type="method" value="EM"/>
    <property type="resolution" value="3.40 A"/>
    <property type="chains" value="S=1-101"/>
</dbReference>
<dbReference type="PDB" id="8URH">
    <property type="method" value="EM"/>
    <property type="resolution" value="5.70 A"/>
    <property type="chains" value="S=1-101"/>
</dbReference>
<dbReference type="PDB" id="8URI">
    <property type="method" value="EM"/>
    <property type="resolution" value="5.30 A"/>
    <property type="chains" value="S=1-101"/>
</dbReference>
<dbReference type="PDB" id="8URX">
    <property type="method" value="EM"/>
    <property type="resolution" value="6.60 A"/>
    <property type="chains" value="S=1-101"/>
</dbReference>
<dbReference type="PDB" id="8URY">
    <property type="method" value="EM"/>
    <property type="resolution" value="3.10 A"/>
    <property type="chains" value="S=1-101"/>
</dbReference>
<dbReference type="PDB" id="8VS9">
    <property type="method" value="EM"/>
    <property type="resolution" value="3.90 A"/>
    <property type="chains" value="S14=1-101"/>
</dbReference>
<dbReference type="PDB" id="8VSA">
    <property type="method" value="EM"/>
    <property type="resolution" value="3.70 A"/>
    <property type="chains" value="S14=1-101"/>
</dbReference>
<dbReference type="PDB" id="8YUO">
    <property type="method" value="EM"/>
    <property type="resolution" value="2.25 A"/>
    <property type="chains" value="N=1-101"/>
</dbReference>
<dbReference type="PDB" id="8YUP">
    <property type="method" value="EM"/>
    <property type="resolution" value="2.39 A"/>
    <property type="chains" value="N=1-101"/>
</dbReference>
<dbReference type="PDB" id="8YUQ">
    <property type="method" value="EM"/>
    <property type="resolution" value="2.41 A"/>
    <property type="chains" value="N=1-101"/>
</dbReference>
<dbReference type="PDB" id="8YUR">
    <property type="method" value="EM"/>
    <property type="resolution" value="2.47 A"/>
    <property type="chains" value="N=1-101"/>
</dbReference>
<dbReference type="PDB" id="8YUS">
    <property type="method" value="EM"/>
    <property type="resolution" value="2.43 A"/>
    <property type="chains" value="N=1-101"/>
</dbReference>
<dbReference type="PDB" id="9DUK">
    <property type="method" value="EM"/>
    <property type="resolution" value="2.56 A"/>
    <property type="chains" value="N=1-101"/>
</dbReference>
<dbReference type="PDB" id="9DUL">
    <property type="method" value="EM"/>
    <property type="resolution" value="2.56 A"/>
    <property type="chains" value="N=1-101"/>
</dbReference>
<dbReference type="PDB" id="9FBV">
    <property type="method" value="EM"/>
    <property type="resolution" value="2.40 A"/>
    <property type="chains" value="N=1-101"/>
</dbReference>
<dbReference type="PDB" id="9GFT">
    <property type="method" value="EM"/>
    <property type="resolution" value="3.10 A"/>
    <property type="chains" value="AM/G=1-101"/>
</dbReference>
<dbReference type="PDB" id="9GGR">
    <property type="method" value="EM"/>
    <property type="resolution" value="3.20 A"/>
    <property type="chains" value="AM/G=1-101"/>
</dbReference>
<dbReference type="PDB" id="9GUP">
    <property type="method" value="EM"/>
    <property type="resolution" value="2.80 A"/>
    <property type="chains" value="O=1-101"/>
</dbReference>
<dbReference type="PDB" id="9GUQ">
    <property type="method" value="EM"/>
    <property type="resolution" value="3.10 A"/>
    <property type="chains" value="O=1-101"/>
</dbReference>
<dbReference type="PDB" id="9GUS">
    <property type="method" value="EM"/>
    <property type="resolution" value="3.50 A"/>
    <property type="chains" value="O=1-101"/>
</dbReference>
<dbReference type="PDB" id="9GUT">
    <property type="method" value="EM"/>
    <property type="resolution" value="2.80 A"/>
    <property type="chains" value="O=1-101"/>
</dbReference>
<dbReference type="PDB" id="9GUU">
    <property type="method" value="EM"/>
    <property type="resolution" value="2.50 A"/>
    <property type="chains" value="O=1-101"/>
</dbReference>
<dbReference type="PDB" id="9GUV">
    <property type="method" value="EM"/>
    <property type="resolution" value="3.00 A"/>
    <property type="chains" value="O=1-101"/>
</dbReference>
<dbReference type="PDB" id="9GUW">
    <property type="method" value="EM"/>
    <property type="resolution" value="3.10 A"/>
    <property type="chains" value="O=1-101"/>
</dbReference>
<dbReference type="PDB" id="9GUX">
    <property type="method" value="EM"/>
    <property type="resolution" value="3.30 A"/>
    <property type="chains" value="O=1-101"/>
</dbReference>
<dbReference type="PDB" id="9MOR">
    <property type="method" value="EM"/>
    <property type="resolution" value="2.65 A"/>
    <property type="chains" value="s=1-101"/>
</dbReference>
<dbReference type="PDB" id="9MQ4">
    <property type="method" value="EM"/>
    <property type="resolution" value="2.78 A"/>
    <property type="chains" value="s=1-101"/>
</dbReference>
<dbReference type="PDBsum" id="2YKR"/>
<dbReference type="PDBsum" id="3J9Y"/>
<dbReference type="PDBsum" id="3J9Z"/>
<dbReference type="PDBsum" id="3JA1"/>
<dbReference type="PDBsum" id="3JBU"/>
<dbReference type="PDBsum" id="3JBV"/>
<dbReference type="PDBsum" id="3JCD"/>
<dbReference type="PDBsum" id="3JCE"/>
<dbReference type="PDBsum" id="3JCJ"/>
<dbReference type="PDBsum" id="3JCN"/>
<dbReference type="PDBsum" id="4A2I"/>
<dbReference type="PDBsum" id="4ADV"/>
<dbReference type="PDBsum" id="4U1U"/>
<dbReference type="PDBsum" id="4U1V"/>
<dbReference type="PDBsum" id="4U20"/>
<dbReference type="PDBsum" id="4U24"/>
<dbReference type="PDBsum" id="4U25"/>
<dbReference type="PDBsum" id="4U26"/>
<dbReference type="PDBsum" id="4U27"/>
<dbReference type="PDBsum" id="4V47"/>
<dbReference type="PDBsum" id="4V48"/>
<dbReference type="PDBsum" id="4V4H"/>
<dbReference type="PDBsum" id="4V4Q"/>
<dbReference type="PDBsum" id="4V4V"/>
<dbReference type="PDBsum" id="4V4W"/>
<dbReference type="PDBsum" id="4V50"/>
<dbReference type="PDBsum" id="4V52"/>
<dbReference type="PDBsum" id="4V53"/>
<dbReference type="PDBsum" id="4V54"/>
<dbReference type="PDBsum" id="4V55"/>
<dbReference type="PDBsum" id="4V56"/>
<dbReference type="PDBsum" id="4V57"/>
<dbReference type="PDBsum" id="4V5B"/>
<dbReference type="PDBsum" id="4V5H"/>
<dbReference type="PDBsum" id="4V5Y"/>
<dbReference type="PDBsum" id="4V64"/>
<dbReference type="PDBsum" id="4V65"/>
<dbReference type="PDBsum" id="4V66"/>
<dbReference type="PDBsum" id="4V69"/>
<dbReference type="PDBsum" id="4V6C"/>
<dbReference type="PDBsum" id="4V6D"/>
<dbReference type="PDBsum" id="4V6E"/>
<dbReference type="PDBsum" id="4V6K"/>
<dbReference type="PDBsum" id="4V6L"/>
<dbReference type="PDBsum" id="4V6M"/>
<dbReference type="PDBsum" id="4V6N"/>
<dbReference type="PDBsum" id="4V6O"/>
<dbReference type="PDBsum" id="4V6P"/>
<dbReference type="PDBsum" id="4V6Q"/>
<dbReference type="PDBsum" id="4V6R"/>
<dbReference type="PDBsum" id="4V6S"/>
<dbReference type="PDBsum" id="4V6T"/>
<dbReference type="PDBsum" id="4V6V"/>
<dbReference type="PDBsum" id="4V6Y"/>
<dbReference type="PDBsum" id="4V6Z"/>
<dbReference type="PDBsum" id="4V70"/>
<dbReference type="PDBsum" id="4V71"/>
<dbReference type="PDBsum" id="4V72"/>
<dbReference type="PDBsum" id="4V73"/>
<dbReference type="PDBsum" id="4V74"/>
<dbReference type="PDBsum" id="4V75"/>
<dbReference type="PDBsum" id="4V76"/>
<dbReference type="PDBsum" id="4V77"/>
<dbReference type="PDBsum" id="4V78"/>
<dbReference type="PDBsum" id="4V79"/>
<dbReference type="PDBsum" id="4V7A"/>
<dbReference type="PDBsum" id="4V7B"/>
<dbReference type="PDBsum" id="4V7C"/>
<dbReference type="PDBsum" id="4V7D"/>
<dbReference type="PDBsum" id="4V7I"/>
<dbReference type="PDBsum" id="4V7S"/>
<dbReference type="PDBsum" id="4V7T"/>
<dbReference type="PDBsum" id="4V7U"/>
<dbReference type="PDBsum" id="4V7V"/>
<dbReference type="PDBsum" id="4V85"/>
<dbReference type="PDBsum" id="4V89"/>
<dbReference type="PDBsum" id="4V9C"/>
<dbReference type="PDBsum" id="4V9D"/>
<dbReference type="PDBsum" id="4V9O"/>
<dbReference type="PDBsum" id="4V9P"/>
<dbReference type="PDBsum" id="4WF1"/>
<dbReference type="PDBsum" id="4WOI"/>
<dbReference type="PDBsum" id="4WWW"/>
<dbReference type="PDBsum" id="4YBB"/>
<dbReference type="PDBsum" id="5AFI"/>
<dbReference type="PDBsum" id="5H5U"/>
<dbReference type="PDBsum" id="5IQR"/>
<dbReference type="PDBsum" id="5IT8"/>
<dbReference type="PDBsum" id="5J5B"/>
<dbReference type="PDBsum" id="5J7L"/>
<dbReference type="PDBsum" id="5J88"/>
<dbReference type="PDBsum" id="5J8A"/>
<dbReference type="PDBsum" id="5J91"/>
<dbReference type="PDBsum" id="5JC9"/>
<dbReference type="PDBsum" id="5JTE"/>
<dbReference type="PDBsum" id="5JU8"/>
<dbReference type="PDBsum" id="5KCR"/>
<dbReference type="PDBsum" id="5KCS"/>
<dbReference type="PDBsum" id="5KPS"/>
<dbReference type="PDBsum" id="5KPV"/>
<dbReference type="PDBsum" id="5KPW"/>
<dbReference type="PDBsum" id="5KPX"/>
<dbReference type="PDBsum" id="5L3P"/>
<dbReference type="PDBsum" id="5LZA"/>
<dbReference type="PDBsum" id="5LZB"/>
<dbReference type="PDBsum" id="5LZC"/>
<dbReference type="PDBsum" id="5LZD"/>
<dbReference type="PDBsum" id="5LZE"/>
<dbReference type="PDBsum" id="5LZF"/>
<dbReference type="PDBsum" id="5MDV"/>
<dbReference type="PDBsum" id="5MDW"/>
<dbReference type="PDBsum" id="5MDY"/>
<dbReference type="PDBsum" id="5MDZ"/>
<dbReference type="PDBsum" id="5ME0"/>
<dbReference type="PDBsum" id="5ME1"/>
<dbReference type="PDBsum" id="5MGP"/>
<dbReference type="PDBsum" id="5MY1"/>
<dbReference type="PDBsum" id="5NO2"/>
<dbReference type="PDBsum" id="5NO3"/>
<dbReference type="PDBsum" id="5NO4"/>
<dbReference type="PDBsum" id="5NP6"/>
<dbReference type="PDBsum" id="5NWY"/>
<dbReference type="PDBsum" id="5O2R"/>
<dbReference type="PDBsum" id="5U4I"/>
<dbReference type="PDBsum" id="5U9F"/>
<dbReference type="PDBsum" id="5U9G"/>
<dbReference type="PDBsum" id="5UYK"/>
<dbReference type="PDBsum" id="5UYL"/>
<dbReference type="PDBsum" id="5UYM"/>
<dbReference type="PDBsum" id="5UYN"/>
<dbReference type="PDBsum" id="5UYP"/>
<dbReference type="PDBsum" id="5UYQ"/>
<dbReference type="PDBsum" id="5UZ4"/>
<dbReference type="PDBsum" id="5WDT"/>
<dbReference type="PDBsum" id="5WE4"/>
<dbReference type="PDBsum" id="5WE6"/>
<dbReference type="PDBsum" id="5WF0"/>
<dbReference type="PDBsum" id="5WFK"/>
<dbReference type="PDBsum" id="5WFS"/>
<dbReference type="PDBsum" id="6AWB"/>
<dbReference type="PDBsum" id="6AWC"/>
<dbReference type="PDBsum" id="6AWD"/>
<dbReference type="PDBsum" id="6BU8"/>
<dbReference type="PDBsum" id="6BY1"/>
<dbReference type="PDBsum" id="6C4I"/>
<dbReference type="PDBsum" id="6DNC"/>
<dbReference type="PDBsum" id="6ENF"/>
<dbReference type="PDBsum" id="6ENJ"/>
<dbReference type="PDBsum" id="6ENU"/>
<dbReference type="PDBsum" id="6GWT"/>
<dbReference type="PDBsum" id="6GXM"/>
<dbReference type="PDBsum" id="6GXN"/>
<dbReference type="PDBsum" id="6GXO"/>
<dbReference type="PDBsum" id="6GXP"/>
<dbReference type="PDBsum" id="6H4N"/>
<dbReference type="PDBsum" id="6H58"/>
<dbReference type="PDBsum" id="6HRM"/>
<dbReference type="PDBsum" id="6I7V"/>
<dbReference type="PDBsum" id="6NQB"/>
<dbReference type="PDBsum" id="6O7K"/>
<dbReference type="PDBsum" id="6O9J"/>
<dbReference type="PDBsum" id="6O9K"/>
<dbReference type="PDBsum" id="6OFX"/>
<dbReference type="PDBsum" id="6OG7"/>
<dbReference type="PDBsum" id="6OGF"/>
<dbReference type="PDBsum" id="6OGG"/>
<dbReference type="PDBsum" id="6OGI"/>
<dbReference type="PDBsum" id="6OM6"/>
<dbReference type="PDBsum" id="6ORE"/>
<dbReference type="PDBsum" id="6ORL"/>
<dbReference type="PDBsum" id="6OSK"/>
<dbReference type="PDBsum" id="6OSQ"/>
<dbReference type="PDBsum" id="6OST"/>
<dbReference type="PDBsum" id="6OT3"/>
<dbReference type="PDBsum" id="6OUO"/>
<dbReference type="PDBsum" id="6Q97"/>
<dbReference type="PDBsum" id="6Q98"/>
<dbReference type="PDBsum" id="6Q9A"/>
<dbReference type="PDBsum" id="6SZS"/>
<dbReference type="PDBsum" id="6TBV"/>
<dbReference type="PDBsum" id="6TC3"/>
<dbReference type="PDBsum" id="6VU3"/>
<dbReference type="PDBsum" id="6VWL"/>
<dbReference type="PDBsum" id="6VWM"/>
<dbReference type="PDBsum" id="6VWN"/>
<dbReference type="PDBsum" id="6VYQ"/>
<dbReference type="PDBsum" id="6VYR"/>
<dbReference type="PDBsum" id="6VYS"/>
<dbReference type="PDBsum" id="6VYT"/>
<dbReference type="PDBsum" id="6VYU"/>
<dbReference type="PDBsum" id="6VYW"/>
<dbReference type="PDBsum" id="6VYX"/>
<dbReference type="PDBsum" id="6VYY"/>
<dbReference type="PDBsum" id="6VYZ"/>
<dbReference type="PDBsum" id="6VZ2"/>
<dbReference type="PDBsum" id="6VZ3"/>
<dbReference type="PDBsum" id="6VZ5"/>
<dbReference type="PDBsum" id="6VZ7"/>
<dbReference type="PDBsum" id="6VZJ"/>
<dbReference type="PDBsum" id="6W6K"/>
<dbReference type="PDBsum" id="6W77"/>
<dbReference type="PDBsum" id="6W7M"/>
<dbReference type="PDBsum" id="6W7N"/>
<dbReference type="PDBsum" id="6WD0"/>
<dbReference type="PDBsum" id="6WD1"/>
<dbReference type="PDBsum" id="6WD2"/>
<dbReference type="PDBsum" id="6WD3"/>
<dbReference type="PDBsum" id="6WD4"/>
<dbReference type="PDBsum" id="6WD5"/>
<dbReference type="PDBsum" id="6WD6"/>
<dbReference type="PDBsum" id="6WD7"/>
<dbReference type="PDBsum" id="6WD8"/>
<dbReference type="PDBsum" id="6WD9"/>
<dbReference type="PDBsum" id="6WDA"/>
<dbReference type="PDBsum" id="6WDB"/>
<dbReference type="PDBsum" id="6WDC"/>
<dbReference type="PDBsum" id="6WDD"/>
<dbReference type="PDBsum" id="6WDE"/>
<dbReference type="PDBsum" id="6WDF"/>
<dbReference type="PDBsum" id="6WDG"/>
<dbReference type="PDBsum" id="6WDH"/>
<dbReference type="PDBsum" id="6WDI"/>
<dbReference type="PDBsum" id="6WDJ"/>
<dbReference type="PDBsum" id="6WDK"/>
<dbReference type="PDBsum" id="6WDL"/>
<dbReference type="PDBsum" id="6WDM"/>
<dbReference type="PDBsum" id="6WNV"/>
<dbReference type="PDBsum" id="6WNW"/>
<dbReference type="PDBsum" id="6X6T"/>
<dbReference type="PDBsum" id="6X7F"/>
<dbReference type="PDBsum" id="6X7K"/>
<dbReference type="PDBsum" id="6X9Q"/>
<dbReference type="PDBsum" id="6XDQ"/>
<dbReference type="PDBsum" id="6XDR"/>
<dbReference type="PDBsum" id="6XE0"/>
<dbReference type="PDBsum" id="6XGF"/>
<dbReference type="PDBsum" id="6XII"/>
<dbReference type="PDBsum" id="6XIJ"/>
<dbReference type="PDBsum" id="6XZA"/>
<dbReference type="PDBsum" id="6XZB"/>
<dbReference type="PDBsum" id="6Y69"/>
<dbReference type="PDBsum" id="6ZTJ"/>
<dbReference type="PDBsum" id="6ZTL"/>
<dbReference type="PDBsum" id="6ZTM"/>
<dbReference type="PDBsum" id="6ZTN"/>
<dbReference type="PDBsum" id="6ZTO"/>
<dbReference type="PDBsum" id="6ZTP"/>
<dbReference type="PDBsum" id="6ZU1"/>
<dbReference type="PDBsum" id="7ABZ"/>
<dbReference type="PDBsum" id="7AC7"/>
<dbReference type="PDBsum" id="7ACJ"/>
<dbReference type="PDBsum" id="7ACR"/>
<dbReference type="PDBsum" id="7AF3"/>
<dbReference type="PDBsum" id="7AF5"/>
<dbReference type="PDBsum" id="7AF8"/>
<dbReference type="PDBsum" id="7AFA"/>
<dbReference type="PDBsum" id="7AFD"/>
<dbReference type="PDBsum" id="7AFH"/>
<dbReference type="PDBsum" id="7AFK"/>
<dbReference type="PDBsum" id="7AFN"/>
<dbReference type="PDBsum" id="7B5K"/>
<dbReference type="PDBsum" id="7BOE"/>
<dbReference type="PDBsum" id="7BOH"/>
<dbReference type="PDBsum" id="7D6Z"/>
<dbReference type="PDBsum" id="7D80"/>
<dbReference type="PDBsum" id="7JSS"/>
<dbReference type="PDBsum" id="7JSW"/>
<dbReference type="PDBsum" id="7JSZ"/>
<dbReference type="PDBsum" id="7JT1"/>
<dbReference type="PDBsum" id="7JT2"/>
<dbReference type="PDBsum" id="7JT3"/>
<dbReference type="PDBsum" id="7K00"/>
<dbReference type="PDBsum" id="7K50"/>
<dbReference type="PDBsum" id="7K51"/>
<dbReference type="PDBsum" id="7K52"/>
<dbReference type="PDBsum" id="7K53"/>
<dbReference type="PDBsum" id="7K54"/>
<dbReference type="PDBsum" id="7K55"/>
<dbReference type="PDBsum" id="7LV0"/>
<dbReference type="PDBsum" id="7M5D"/>
<dbReference type="PDBsum" id="7N1P"/>
<dbReference type="PDBsum" id="7N2C"/>
<dbReference type="PDBsum" id="7N2U"/>
<dbReference type="PDBsum" id="7N2V"/>
<dbReference type="PDBsum" id="7N30"/>
<dbReference type="PDBsum" id="7N31"/>
<dbReference type="PDBsum" id="7NAR"/>
<dbReference type="PDBsum" id="7NAT"/>
<dbReference type="PDBsum" id="7NAU"/>
<dbReference type="PDBsum" id="7NAV"/>
<dbReference type="PDBsum" id="7NAX"/>
<dbReference type="PDBsum" id="7NBU"/>
<dbReference type="PDBsum" id="7O19"/>
<dbReference type="PDBsum" id="7O1A"/>
<dbReference type="PDBsum" id="7O1C"/>
<dbReference type="PDBsum" id="7OE0"/>
<dbReference type="PDBsum" id="7OE1"/>
<dbReference type="PDBsum" id="7OIZ"/>
<dbReference type="PDBsum" id="7OJ0"/>
<dbReference type="PDBsum" id="7P3K"/>
<dbReference type="PDBsum" id="7PJU"/>
<dbReference type="PDBsum" id="7PJV"/>
<dbReference type="PDBsum" id="7PJY"/>
<dbReference type="PDBsum" id="7QG8"/>
<dbReference type="PDBsum" id="7QGH"/>
<dbReference type="PDBsum" id="7QGN"/>
<dbReference type="PDBsum" id="7QGR"/>
<dbReference type="PDBsum" id="7S1G"/>
<dbReference type="PDBsum" id="7S1H"/>
<dbReference type="PDBsum" id="7S1I"/>
<dbReference type="PDBsum" id="7S1J"/>
<dbReference type="PDBsum" id="7S1K"/>
<dbReference type="PDBsum" id="7SA4"/>
<dbReference type="PDBsum" id="7SS9"/>
<dbReference type="PDBsum" id="7SSD"/>
<dbReference type="PDBsum" id="7SSL"/>
<dbReference type="PDBsum" id="7SSN"/>
<dbReference type="PDBsum" id="7SSO"/>
<dbReference type="PDBsum" id="7SSW"/>
<dbReference type="PDBsum" id="7ST2"/>
<dbReference type="PDBsum" id="7ST6"/>
<dbReference type="PDBsum" id="7ST7"/>
<dbReference type="PDBsum" id="7TOS"/>
<dbReference type="PDBsum" id="7UG7"/>
<dbReference type="PDBsum" id="7UPH"/>
<dbReference type="PDBsum" id="7Y7C"/>
<dbReference type="PDBsum" id="7Y7D"/>
<dbReference type="PDBsum" id="7Y7E"/>
<dbReference type="PDBsum" id="7Y7F"/>
<dbReference type="PDBsum" id="7Y7G"/>
<dbReference type="PDBsum" id="7Y7H"/>
<dbReference type="PDBsum" id="7ZTA"/>
<dbReference type="PDBsum" id="8A3L"/>
<dbReference type="PDBsum" id="8AKN"/>
<dbReference type="PDBsum" id="8AM9"/>
<dbReference type="PDBsum" id="8AYE"/>
<dbReference type="PDBsum" id="8B0X"/>
<dbReference type="PDBsum" id="8B7Y"/>
<dbReference type="PDBsum" id="8BF7"/>
<dbReference type="PDBsum" id="8BGE"/>
<dbReference type="PDBsum" id="8BGH"/>
<dbReference type="PDBsum" id="8BH4"/>
<dbReference type="PDBsum" id="8BHJ"/>
<dbReference type="PDBsum" id="8BHL"/>
<dbReference type="PDBsum" id="8BHN"/>
<dbReference type="PDBsum" id="8BHP"/>
<dbReference type="PDBsum" id="8BIL"/>
<dbReference type="PDBsum" id="8BIM"/>
<dbReference type="PDBsum" id="8CA7"/>
<dbReference type="PDBsum" id="8CAZ"/>
<dbReference type="PDBsum" id="8CF1"/>
<dbReference type="PDBsum" id="8CF8"/>
<dbReference type="PDBsum" id="8CGI"/>
<dbReference type="PDBsum" id="8EIU"/>
<dbReference type="PDBsum" id="8EKC"/>
<dbReference type="PDBsum" id="8EMM"/>
<dbReference type="PDBsum" id="8EYQ"/>
<dbReference type="PDBsum" id="8EYT"/>
<dbReference type="PDBsum" id="8FIZ"/>
<dbReference type="PDBsum" id="8FTO"/>
<dbReference type="PDBsum" id="8FZD"/>
<dbReference type="PDBsum" id="8FZE"/>
<dbReference type="PDBsum" id="8FZF"/>
<dbReference type="PDBsum" id="8FZG"/>
<dbReference type="PDBsum" id="8FZH"/>
<dbReference type="PDBsum" id="8FZI"/>
<dbReference type="PDBsum" id="8FZJ"/>
<dbReference type="PDBsum" id="8G2U"/>
<dbReference type="PDBsum" id="8G31"/>
<dbReference type="PDBsum" id="8G34"/>
<dbReference type="PDBsum" id="8G38"/>
<dbReference type="PDBsum" id="8G6W"/>
<dbReference type="PDBsum" id="8G7P"/>
<dbReference type="PDBsum" id="8G7Q"/>
<dbReference type="PDBsum" id="8G7R"/>
<dbReference type="PDBsum" id="8G7S"/>
<dbReference type="PDBsum" id="8HSP"/>
<dbReference type="PDBsum" id="8HTZ"/>
<dbReference type="PDBsum" id="8HU1"/>
<dbReference type="PDBsum" id="8IFB"/>
<dbReference type="PDBsum" id="8IFC"/>
<dbReference type="PDBsum" id="8JSG"/>
<dbReference type="PDBsum" id="8K3O"/>
<dbReference type="PDBsum" id="8K4E"/>
<dbReference type="PDBsum" id="8P16"/>
<dbReference type="PDBsum" id="8P17"/>
<dbReference type="PDBsum" id="8P18"/>
<dbReference type="PDBsum" id="8PEG"/>
<dbReference type="PDBsum" id="8PHJ"/>
<dbReference type="PDBsum" id="8PKL"/>
<dbReference type="PDBsum" id="8PVA"/>
<dbReference type="PDBsum" id="8Q4F"/>
<dbReference type="PDBsum" id="8QBT"/>
<dbReference type="PDBsum" id="8QK7"/>
<dbReference type="PDBsum" id="8QOA"/>
<dbReference type="PDBsum" id="8R3V"/>
<dbReference type="PDBsum" id="8R6C"/>
<dbReference type="PDBsum" id="8R8M"/>
<dbReference type="PDBsum" id="8RCL"/>
<dbReference type="PDBsum" id="8RCM"/>
<dbReference type="PDBsum" id="8RCS"/>
<dbReference type="PDBsum" id="8RCT"/>
<dbReference type="PDBsum" id="8SYL"/>
<dbReference type="PDBsum" id="8T5D"/>
<dbReference type="PDBsum" id="8T5H"/>
<dbReference type="PDBsum" id="8UPO"/>
<dbReference type="PDBsum" id="8UPR"/>
<dbReference type="PDBsum" id="8UQL"/>
<dbReference type="PDBsum" id="8UQM"/>
<dbReference type="PDBsum" id="8UQP"/>
<dbReference type="PDBsum" id="8UR0"/>
<dbReference type="PDBsum" id="8URH"/>
<dbReference type="PDBsum" id="8URI"/>
<dbReference type="PDBsum" id="8URX"/>
<dbReference type="PDBsum" id="8URY"/>
<dbReference type="PDBsum" id="8VS9"/>
<dbReference type="PDBsum" id="8VSA"/>
<dbReference type="PDBsum" id="8YUO"/>
<dbReference type="PDBsum" id="8YUP"/>
<dbReference type="PDBsum" id="8YUQ"/>
<dbReference type="PDBsum" id="8YUR"/>
<dbReference type="PDBsum" id="8YUS"/>
<dbReference type="PDBsum" id="9DUK"/>
<dbReference type="PDBsum" id="9DUL"/>
<dbReference type="PDBsum" id="9FBV"/>
<dbReference type="PDBsum" id="9GFT"/>
<dbReference type="PDBsum" id="9GGR"/>
<dbReference type="PDBsum" id="9GUP"/>
<dbReference type="PDBsum" id="9GUQ"/>
<dbReference type="PDBsum" id="9GUS"/>
<dbReference type="PDBsum" id="9GUT"/>
<dbReference type="PDBsum" id="9GUU"/>
<dbReference type="PDBsum" id="9GUV"/>
<dbReference type="PDBsum" id="9GUW"/>
<dbReference type="PDBsum" id="9GUX"/>
<dbReference type="PDBsum" id="9MOR"/>
<dbReference type="PDBsum" id="9MQ4"/>
<dbReference type="EMDB" id="EMD-0076"/>
<dbReference type="EMDB" id="EMD-0080"/>
<dbReference type="EMDB" id="EMD-0081"/>
<dbReference type="EMDB" id="EMD-0082"/>
<dbReference type="EMDB" id="EMD-0083"/>
<dbReference type="EMDB" id="EMD-0137"/>
<dbReference type="EMDB" id="EMD-0139"/>
<dbReference type="EMDB" id="EMD-0261"/>
<dbReference type="EMDB" id="EMD-10353"/>
<dbReference type="EMDB" id="EMD-10453"/>
<dbReference type="EMDB" id="EMD-10458"/>
<dbReference type="EMDB" id="EMD-10656"/>
<dbReference type="EMDB" id="EMD-10657"/>
<dbReference type="EMDB" id="EMD-10705"/>
<dbReference type="EMDB" id="EMD-11419"/>
<dbReference type="EMDB" id="EMD-11710"/>
<dbReference type="EMDB" id="EMD-11713"/>
<dbReference type="EMDB" id="EMD-11717"/>
<dbReference type="EMDB" id="EMD-11718"/>
<dbReference type="EMDB" id="EMD-12035"/>
<dbReference type="EMDB" id="EMD-12240"/>
<dbReference type="EMDB" id="EMD-12243"/>
<dbReference type="EMDB" id="EMD-12245"/>
<dbReference type="EMDB" id="EMD-12247"/>
<dbReference type="EMDB" id="EMD-12248"/>
<dbReference type="EMDB" id="EMD-12249"/>
<dbReference type="EMDB" id="EMD-12261"/>
<dbReference type="EMDB" id="EMD-12693"/>
<dbReference type="EMDB" id="EMD-12694"/>
<dbReference type="EMDB" id="EMD-12695"/>
<dbReference type="EMDB" id="EMD-12936"/>
<dbReference type="EMDB" id="EMD-12937"/>
<dbReference type="EMDB" id="EMD-13180"/>
<dbReference type="EMDB" id="EMD-13461"/>
<dbReference type="EMDB" id="EMD-13464"/>
<dbReference type="EMDB" id="EMD-13952"/>
<dbReference type="EMDB" id="EMD-13955"/>
<dbReference type="EMDB" id="EMD-14956"/>
<dbReference type="EMDB" id="EMD-15116"/>
<dbReference type="EMDB" id="EMD-15712"/>
<dbReference type="EMDB" id="EMD-15793"/>
<dbReference type="EMDB" id="EMD-15905"/>
<dbReference type="EMDB" id="EMD-16015"/>
<dbReference type="EMDB" id="EMD-16029"/>
<dbReference type="EMDB" id="EMD-16031"/>
<dbReference type="EMDB" id="EMD-16047"/>
<dbReference type="EMDB" id="EMD-16057"/>
<dbReference type="EMDB" id="EMD-16059"/>
<dbReference type="EMDB" id="EMD-16062"/>
<dbReference type="EMDB" id="EMD-16065"/>
<dbReference type="EMDB" id="EMD-16081"/>
<dbReference type="EMDB" id="EMD-16082"/>
<dbReference type="EMDB" id="EMD-16520"/>
<dbReference type="EMDB" id="EMD-16536"/>
<dbReference type="EMDB" id="EMD-16615"/>
<dbReference type="EMDB" id="EMD-16620"/>
<dbReference type="EMDB" id="EMD-16644"/>
<dbReference type="EMDB" id="EMD-17346"/>
<dbReference type="EMDB" id="EMD-17347"/>
<dbReference type="EMDB" id="EMD-17348"/>
<dbReference type="EMDB" id="EMD-17631"/>
<dbReference type="EMDB" id="EMD-17667"/>
<dbReference type="EMDB" id="EMD-17743"/>
<dbReference type="EMDB" id="EMD-17959"/>
<dbReference type="EMDB" id="EMD-18145"/>
<dbReference type="EMDB" id="EMD-18320"/>
<dbReference type="EMDB" id="EMD-18458"/>
<dbReference type="EMDB" id="EMD-18534"/>
<dbReference type="EMDB" id="EMD-18875"/>
<dbReference type="EMDB" id="EMD-18950"/>
<dbReference type="EMDB" id="EMD-19004"/>
<dbReference type="EMDB" id="EMD-19054"/>
<dbReference type="EMDB" id="EMD-19055"/>
<dbReference type="EMDB" id="EMD-19058"/>
<dbReference type="EMDB" id="EMD-19059"/>
<dbReference type="EMDB" id="EMD-20048"/>
<dbReference type="EMDB" id="EMD-20052"/>
<dbReference type="EMDB" id="EMD-21420"/>
<dbReference type="EMDB" id="EMD-21421"/>
<dbReference type="EMDB" id="EMD-21422"/>
<dbReference type="EMDB" id="EMD-21558"/>
<dbReference type="EMDB" id="EMD-21569"/>
<dbReference type="EMDB" id="EMD-21571"/>
<dbReference type="EMDB" id="EMD-21572"/>
<dbReference type="EMDB" id="EMD-21620"/>
<dbReference type="EMDB" id="EMD-21625"/>
<dbReference type="EMDB" id="EMD-21630"/>
<dbReference type="EMDB" id="EMD-21631"/>
<dbReference type="EMDB" id="EMD-21632"/>
<dbReference type="EMDB" id="EMD-21633"/>
<dbReference type="EMDB" id="EMD-21634"/>
<dbReference type="EMDB" id="EMD-21635"/>
<dbReference type="EMDB" id="EMD-21636"/>
<dbReference type="EMDB" id="EMD-21637"/>
<dbReference type="EMDB" id="EMD-21638"/>
<dbReference type="EMDB" id="EMD-21639"/>
<dbReference type="EMDB" id="EMD-21640"/>
<dbReference type="EMDB" id="EMD-21641"/>
<dbReference type="EMDB" id="EMD-21857"/>
<dbReference type="EMDB" id="EMD-21858"/>
<dbReference type="EMDB" id="EMD-22143"/>
<dbReference type="EMDB" id="EMD-22459"/>
<dbReference type="EMDB" id="EMD-22461"/>
<dbReference type="EMDB" id="EMD-22464"/>
<dbReference type="EMDB" id="EMD-22466"/>
<dbReference type="EMDB" id="EMD-22469"/>
<dbReference type="EMDB" id="EMD-22472"/>
<dbReference type="EMDB" id="EMD-22669"/>
<dbReference type="EMDB" id="EMD-22670"/>
<dbReference type="EMDB" id="EMD-22671"/>
<dbReference type="EMDB" id="EMD-22672"/>
<dbReference type="EMDB" id="EMD-22673"/>
<dbReference type="EMDB" id="EMD-22674"/>
<dbReference type="EMDB" id="EMD-23528"/>
<dbReference type="EMDB" id="EMD-24120"/>
<dbReference type="EMDB" id="EMD-24132"/>
<dbReference type="EMDB" id="EMD-24133"/>
<dbReference type="EMDB" id="EMD-24134"/>
<dbReference type="EMDB" id="EMD-24135"/>
<dbReference type="EMDB" id="EMD-24136"/>
<dbReference type="EMDB" id="EMD-24803"/>
<dbReference type="EMDB" id="EMD-25405"/>
<dbReference type="EMDB" id="EMD-25407"/>
<dbReference type="EMDB" id="EMD-25409"/>
<dbReference type="EMDB" id="EMD-25410"/>
<dbReference type="EMDB" id="EMD-25411"/>
<dbReference type="EMDB" id="EMD-25415"/>
<dbReference type="EMDB" id="EMD-25418"/>
<dbReference type="EMDB" id="EMD-25420"/>
<dbReference type="EMDB" id="EMD-25421"/>
<dbReference type="EMDB" id="EMD-30598"/>
<dbReference type="EMDB" id="EMD-30611"/>
<dbReference type="EMDB" id="EMD-33660"/>
<dbReference type="EMDB" id="EMD-33661"/>
<dbReference type="EMDB" id="EMD-33662"/>
<dbReference type="EMDB" id="EMD-33663"/>
<dbReference type="EMDB" id="EMD-33664"/>
<dbReference type="EMDB" id="EMD-33665"/>
<dbReference type="EMDB" id="EMD-3489"/>
<dbReference type="EMDB" id="EMD-3490"/>
<dbReference type="EMDB" id="EMD-3492"/>
<dbReference type="EMDB" id="EMD-3493"/>
<dbReference type="EMDB" id="EMD-3494"/>
<dbReference type="EMDB" id="EMD-3495"/>
<dbReference type="EMDB" id="EMD-35001"/>
<dbReference type="EMDB" id="EMD-35020"/>
<dbReference type="EMDB" id="EMD-35022"/>
<dbReference type="EMDB" id="EMD-3508"/>
<dbReference type="EMDB" id="EMD-35411"/>
<dbReference type="EMDB" id="EMD-35412"/>
<dbReference type="EMDB" id="EMD-3580"/>
<dbReference type="EMDB" id="EMD-3661"/>
<dbReference type="EMDB" id="EMD-36619"/>
<dbReference type="EMDB" id="EMD-3662"/>
<dbReference type="EMDB" id="EMD-3663"/>
<dbReference type="EMDB" id="EMD-36854"/>
<dbReference type="EMDB" id="EMD-36883"/>
<dbReference type="EMDB" id="EMD-3713"/>
<dbReference type="EMDB" id="EMD-3730"/>
<dbReference type="EMDB" id="EMD-3898"/>
<dbReference type="EMDB" id="EMD-3899"/>
<dbReference type="EMDB" id="EMD-3903"/>
<dbReference type="EMDB" id="EMD-39577"/>
<dbReference type="EMDB" id="EMD-39578"/>
<dbReference type="EMDB" id="EMD-39579"/>
<dbReference type="EMDB" id="EMD-39580"/>
<dbReference type="EMDB" id="EMD-39581"/>
<dbReference type="EMDB" id="EMD-4001"/>
<dbReference type="EMDB" id="EMD-4121"/>
<dbReference type="EMDB" id="EMD-4122"/>
<dbReference type="EMDB" id="EMD-4123"/>
<dbReference type="EMDB" id="EMD-4124"/>
<dbReference type="EMDB" id="EMD-4125"/>
<dbReference type="EMDB" id="EMD-4126"/>
<dbReference type="EMDB" id="EMD-4476"/>
<dbReference type="EMDB" id="EMD-4477"/>
<dbReference type="EMDB" id="EMD-4478"/>
<dbReference type="EMDB" id="EMD-50296"/>
<dbReference type="EMDB" id="EMD-51318"/>
<dbReference type="EMDB" id="EMD-51340"/>
<dbReference type="EMDB" id="EMD-51615"/>
<dbReference type="EMDB" id="EMD-51616"/>
<dbReference type="EMDB" id="EMD-51618"/>
<dbReference type="EMDB" id="EMD-51619"/>
<dbReference type="EMDB" id="EMD-51620"/>
<dbReference type="EMDB" id="EMD-51621"/>
<dbReference type="EMDB" id="EMD-51622"/>
<dbReference type="EMDB" id="EMD-51623"/>
<dbReference type="EMDB" id="EMD-6667"/>
<dbReference type="EMDB" id="EMD-7289"/>
<dbReference type="EMDB" id="EMD-7341"/>
<dbReference type="EMDB" id="EMD-8107"/>
<dbReference type="EMDB" id="EMD-8175"/>
<dbReference type="EMDB" id="EMD-8176"/>
<dbReference type="EMDB" id="EMD-8237"/>
<dbReference type="EMDB" id="EMD-8238"/>
<dbReference type="EMDB" id="EMD-8279"/>
<dbReference type="EMDB" id="EMD-8280"/>
<dbReference type="EMDB" id="EMD-8281"/>
<dbReference type="EMDB" id="EMD-8282"/>
<dbReference type="EMDB" id="EMD-8505"/>
<dbReference type="EMDB" id="EMD-8615"/>
<dbReference type="EMDB" id="EMD-8616"/>
<dbReference type="EMDB" id="EMD-8617"/>
<dbReference type="EMDB" id="EMD-8618"/>
<dbReference type="EMDB" id="EMD-8619"/>
<dbReference type="EMDB" id="EMD-8620"/>
<dbReference type="EMDB" id="EMD-8813"/>
<dbReference type="EMDB" id="EMD-8814"/>
<dbReference type="EMDB" id="EMD-8815"/>
<dbReference type="EMDB" id="EMD-8828"/>
<dbReference type="SMR" id="P0AG59"/>
<dbReference type="BioGRID" id="4263444">
    <property type="interactions" value="16"/>
</dbReference>
<dbReference type="BioGRID" id="852113">
    <property type="interactions" value="1"/>
</dbReference>
<dbReference type="ComplexPortal" id="CPX-3802">
    <property type="entry name" value="30S small ribosomal subunit"/>
</dbReference>
<dbReference type="DIP" id="DIP-35805N"/>
<dbReference type="FunCoup" id="P0AG59">
    <property type="interactions" value="1087"/>
</dbReference>
<dbReference type="IntAct" id="P0AG59">
    <property type="interactions" value="96"/>
</dbReference>
<dbReference type="STRING" id="511145.b3307"/>
<dbReference type="DrugBank" id="DB09093">
    <property type="generic name" value="Chlortetracycline"/>
</dbReference>
<dbReference type="DrugBank" id="DB12455">
    <property type="generic name" value="Omadacycline"/>
</dbReference>
<dbReference type="DrugBank" id="DB12615">
    <property type="generic name" value="Plazomicin"/>
</dbReference>
<dbReference type="DrugBank" id="DB00759">
    <property type="generic name" value="Tetracycline"/>
</dbReference>
<dbReference type="DrugBank" id="DB00560">
    <property type="generic name" value="Tigecycline"/>
</dbReference>
<dbReference type="jPOST" id="P0AG59"/>
<dbReference type="PaxDb" id="511145-b3307"/>
<dbReference type="EnsemblBacteria" id="AAC76332">
    <property type="protein sequence ID" value="AAC76332"/>
    <property type="gene ID" value="b3307"/>
</dbReference>
<dbReference type="GeneID" id="93778680"/>
<dbReference type="GeneID" id="947801"/>
<dbReference type="KEGG" id="ecj:JW3269"/>
<dbReference type="KEGG" id="eco:b3307"/>
<dbReference type="KEGG" id="ecoc:C3026_17975"/>
<dbReference type="PATRIC" id="fig|1411691.4.peg.3424"/>
<dbReference type="EchoBASE" id="EB0906"/>
<dbReference type="eggNOG" id="COG0199">
    <property type="taxonomic scope" value="Bacteria"/>
</dbReference>
<dbReference type="HOGENOM" id="CLU_139869_0_1_6"/>
<dbReference type="InParanoid" id="P0AG59"/>
<dbReference type="OMA" id="FGLCRNQ"/>
<dbReference type="OrthoDB" id="9810484at2"/>
<dbReference type="PhylomeDB" id="P0AG59"/>
<dbReference type="BioCyc" id="EcoCyc:EG10913-MONOMER"/>
<dbReference type="BioCyc" id="MetaCyc:EG10913-MONOMER"/>
<dbReference type="EvolutionaryTrace" id="P0AG59"/>
<dbReference type="PRO" id="PR:P0AG59"/>
<dbReference type="Proteomes" id="UP000000625">
    <property type="component" value="Chromosome"/>
</dbReference>
<dbReference type="GO" id="GO:0005737">
    <property type="term" value="C:cytoplasm"/>
    <property type="evidence" value="ECO:0000314"/>
    <property type="project" value="ComplexPortal"/>
</dbReference>
<dbReference type="GO" id="GO:0022627">
    <property type="term" value="C:cytosolic small ribosomal subunit"/>
    <property type="evidence" value="ECO:0000314"/>
    <property type="project" value="CAFA"/>
</dbReference>
<dbReference type="GO" id="GO:0015935">
    <property type="term" value="C:small ribosomal subunit"/>
    <property type="evidence" value="ECO:0000318"/>
    <property type="project" value="GO_Central"/>
</dbReference>
<dbReference type="GO" id="GO:0019843">
    <property type="term" value="F:rRNA binding"/>
    <property type="evidence" value="ECO:0007669"/>
    <property type="project" value="UniProtKB-UniRule"/>
</dbReference>
<dbReference type="GO" id="GO:0003735">
    <property type="term" value="F:structural constituent of ribosome"/>
    <property type="evidence" value="ECO:0000314"/>
    <property type="project" value="CAFA"/>
</dbReference>
<dbReference type="GO" id="GO:0000049">
    <property type="term" value="F:tRNA binding"/>
    <property type="evidence" value="ECO:0000314"/>
    <property type="project" value="EcoCyc"/>
</dbReference>
<dbReference type="GO" id="GO:0002181">
    <property type="term" value="P:cytoplasmic translation"/>
    <property type="evidence" value="ECO:0000303"/>
    <property type="project" value="ComplexPortal"/>
</dbReference>
<dbReference type="GO" id="GO:0000028">
    <property type="term" value="P:ribosomal small subunit assembly"/>
    <property type="evidence" value="ECO:0000314"/>
    <property type="project" value="CAFA"/>
</dbReference>
<dbReference type="GO" id="GO:0006412">
    <property type="term" value="P:translation"/>
    <property type="evidence" value="ECO:0000318"/>
    <property type="project" value="GO_Central"/>
</dbReference>
<dbReference type="FunFam" id="1.10.287.1480:FF:000001">
    <property type="entry name" value="30S ribosomal protein S14"/>
    <property type="match status" value="1"/>
</dbReference>
<dbReference type="Gene3D" id="1.10.287.1480">
    <property type="match status" value="1"/>
</dbReference>
<dbReference type="HAMAP" id="MF_00537">
    <property type="entry name" value="Ribosomal_uS14_1"/>
    <property type="match status" value="1"/>
</dbReference>
<dbReference type="InterPro" id="IPR001209">
    <property type="entry name" value="Ribosomal_uS14"/>
</dbReference>
<dbReference type="InterPro" id="IPR023036">
    <property type="entry name" value="Ribosomal_uS14_bac/plastid"/>
</dbReference>
<dbReference type="InterPro" id="IPR018271">
    <property type="entry name" value="Ribosomal_uS14_CS"/>
</dbReference>
<dbReference type="NCBIfam" id="NF006477">
    <property type="entry name" value="PRK08881.1"/>
    <property type="match status" value="1"/>
</dbReference>
<dbReference type="PANTHER" id="PTHR19836">
    <property type="entry name" value="30S RIBOSOMAL PROTEIN S14"/>
    <property type="match status" value="1"/>
</dbReference>
<dbReference type="PANTHER" id="PTHR19836:SF19">
    <property type="entry name" value="SMALL RIBOSOMAL SUBUNIT PROTEIN US14M"/>
    <property type="match status" value="1"/>
</dbReference>
<dbReference type="Pfam" id="PF00253">
    <property type="entry name" value="Ribosomal_S14"/>
    <property type="match status" value="1"/>
</dbReference>
<dbReference type="SUPFAM" id="SSF57716">
    <property type="entry name" value="Glucocorticoid receptor-like (DNA-binding domain)"/>
    <property type="match status" value="1"/>
</dbReference>
<dbReference type="PROSITE" id="PS00527">
    <property type="entry name" value="RIBOSOMAL_S14"/>
    <property type="match status" value="1"/>
</dbReference>
<organism>
    <name type="scientific">Escherichia coli (strain K12)</name>
    <dbReference type="NCBI Taxonomy" id="83333"/>
    <lineage>
        <taxon>Bacteria</taxon>
        <taxon>Pseudomonadati</taxon>
        <taxon>Pseudomonadota</taxon>
        <taxon>Gammaproteobacteria</taxon>
        <taxon>Enterobacterales</taxon>
        <taxon>Enterobacteriaceae</taxon>
        <taxon>Escherichia</taxon>
    </lineage>
</organism>